<sequence length="313" mass="35714">MAGQPGHMPHGGSSNNLCHTLGPVHPPDPQRHPNTLSFRCSLADFQIEKKIGRGQFSEVYKATCLLDRKTVALKKVQIFEMMDAKARQDCVKEIGLLKQLNHPNIIKYLDSFIEDNELNIVLELADAGDLSQMIKYFKKQKRLIPERTVWKYFVQLCSAVEHMHSRRVMHRDIKPANVFITATGVVKLGDLGLGRFFSSETTAAHSLVGTPYYMSPERIHENGYNFKSDIWSLGCLLYEMAALQSPFYGDKMNLFSLCQKIEQCDYPPLPGEHYSEKLRELVSMCICPDPHQRPDIGYVHQVAKQMHIWMSST</sequence>
<evidence type="ECO:0000250" key="1"/>
<evidence type="ECO:0000255" key="2">
    <source>
        <dbReference type="PROSITE-ProRule" id="PRU00159"/>
    </source>
</evidence>
<evidence type="ECO:0000255" key="3">
    <source>
        <dbReference type="PROSITE-ProRule" id="PRU10027"/>
    </source>
</evidence>
<evidence type="ECO:0000256" key="4">
    <source>
        <dbReference type="SAM" id="MobiDB-lite"/>
    </source>
</evidence>
<evidence type="ECO:0000269" key="5">
    <source>
    </source>
</evidence>
<evidence type="ECO:0000269" key="6">
    <source>
    </source>
</evidence>
<evidence type="ECO:0000269" key="7">
    <source>
    </source>
</evidence>
<evidence type="ECO:0000269" key="8">
    <source>
    </source>
</evidence>
<evidence type="ECO:0000269" key="9">
    <source>
    </source>
</evidence>
<evidence type="ECO:0000269" key="10">
    <source>
    </source>
</evidence>
<evidence type="ECO:0000269" key="11">
    <source>
    </source>
</evidence>
<evidence type="ECO:0000269" key="12">
    <source>
    </source>
</evidence>
<evidence type="ECO:0000269" key="13">
    <source>
    </source>
</evidence>
<evidence type="ECO:0000269" key="14">
    <source>
    </source>
</evidence>
<evidence type="ECO:0000269" key="15">
    <source>
    </source>
</evidence>
<evidence type="ECO:0000269" key="16">
    <source>
    </source>
</evidence>
<evidence type="ECO:0000269" key="17">
    <source>
    </source>
</evidence>
<evidence type="ECO:0000269" key="18">
    <source>
    </source>
</evidence>
<evidence type="ECO:0000303" key="19">
    <source>
    </source>
</evidence>
<evidence type="ECO:0000303" key="20">
    <source>
    </source>
</evidence>
<evidence type="ECO:0000305" key="21"/>
<evidence type="ECO:0000305" key="22">
    <source>
    </source>
</evidence>
<evidence type="ECO:0000305" key="23">
    <source>
    </source>
</evidence>
<evidence type="ECO:0000305" key="24">
    <source>
    </source>
</evidence>
<evidence type="ECO:0000312" key="25">
    <source>
        <dbReference type="HGNC" id="HGNC:7749"/>
    </source>
</evidence>
<evidence type="ECO:0007744" key="26">
    <source>
    </source>
</evidence>
<evidence type="ECO:0007744" key="27">
    <source>
    </source>
</evidence>
<dbReference type="EC" id="2.7.11.34" evidence="5 8 12"/>
<dbReference type="EMBL" id="AF087909">
    <property type="protein sequence ID" value="AAG13417.1"/>
    <property type="status" value="ALT_SEQ"/>
    <property type="molecule type" value="mRNA"/>
</dbReference>
<dbReference type="EMBL" id="AB026289">
    <property type="protein sequence ID" value="BAA85045.1"/>
    <property type="status" value="ALT_INIT"/>
    <property type="molecule type" value="mRNA"/>
</dbReference>
<dbReference type="EMBL" id="AK294614">
    <property type="protein sequence ID" value="BAH11825.1"/>
    <property type="molecule type" value="mRNA"/>
</dbReference>
<dbReference type="EMBL" id="AK313071">
    <property type="protein sequence ID" value="BAG35899.1"/>
    <property type="molecule type" value="mRNA"/>
</dbReference>
<dbReference type="EMBL" id="AL162724">
    <property type="status" value="NOT_ANNOTATED_CDS"/>
    <property type="molecule type" value="Genomic_DNA"/>
</dbReference>
<dbReference type="EMBL" id="AL137846">
    <property type="status" value="NOT_ANNOTATED_CDS"/>
    <property type="molecule type" value="Genomic_DNA"/>
</dbReference>
<dbReference type="EMBL" id="CH471090">
    <property type="protein sequence ID" value="EAW87579.1"/>
    <property type="molecule type" value="Genomic_DNA"/>
</dbReference>
<dbReference type="EMBL" id="CH471090">
    <property type="protein sequence ID" value="EAW87581.1"/>
    <property type="molecule type" value="Genomic_DNA"/>
</dbReference>
<dbReference type="EMBL" id="BC000101">
    <property type="protein sequence ID" value="AAH00101.2"/>
    <property type="status" value="ALT_INIT"/>
    <property type="molecule type" value="mRNA"/>
</dbReference>
<dbReference type="EMBL" id="BC004174">
    <property type="protein sequence ID" value="AAH04174.2"/>
    <property type="status" value="ALT_INIT"/>
    <property type="molecule type" value="mRNA"/>
</dbReference>
<dbReference type="EMBL" id="BC004209">
    <property type="protein sequence ID" value="AAH04209.2"/>
    <property type="status" value="ALT_INIT"/>
    <property type="molecule type" value="mRNA"/>
</dbReference>
<dbReference type="EMBL" id="BC012761">
    <property type="protein sequence ID" value="AAH12761.1"/>
    <property type="molecule type" value="mRNA"/>
</dbReference>
<dbReference type="EMBL" id="CR457091">
    <property type="protein sequence ID" value="CAG33372.1"/>
    <property type="molecule type" value="mRNA"/>
</dbReference>
<dbReference type="EMBL" id="CR542222">
    <property type="protein sequence ID" value="CAG47018.1"/>
    <property type="molecule type" value="mRNA"/>
</dbReference>
<dbReference type="CCDS" id="CCDS48015.1">
    <molecule id="Q9HC98-2"/>
</dbReference>
<dbReference type="CCDS" id="CCDS55338.1">
    <molecule id="Q9HC98-3"/>
</dbReference>
<dbReference type="CCDS" id="CCDS55339.1">
    <molecule id="Q9HC98-4"/>
</dbReference>
<dbReference type="CCDS" id="CCDS6854.1">
    <molecule id="Q9HC98-1"/>
</dbReference>
<dbReference type="PIR" id="JC7838">
    <property type="entry name" value="JC7838"/>
</dbReference>
<dbReference type="RefSeq" id="NP_001138473.1">
    <molecule id="Q9HC98-2"/>
    <property type="nucleotide sequence ID" value="NM_001145001.3"/>
</dbReference>
<dbReference type="RefSeq" id="NP_001159639.1">
    <molecule id="Q9HC98-3"/>
    <property type="nucleotide sequence ID" value="NM_001166167.2"/>
</dbReference>
<dbReference type="RefSeq" id="NP_001159640.1">
    <molecule id="Q9HC98-1"/>
    <property type="nucleotide sequence ID" value="NM_001166168.2"/>
</dbReference>
<dbReference type="RefSeq" id="NP_001159641.1">
    <molecule id="Q9HC98-4"/>
    <property type="nucleotide sequence ID" value="NM_001166169.2"/>
</dbReference>
<dbReference type="RefSeq" id="NP_001159642.1">
    <molecule id="Q9HC98-1"/>
    <property type="nucleotide sequence ID" value="NM_001166170.2"/>
</dbReference>
<dbReference type="RefSeq" id="NP_001159643.1">
    <molecule id="Q9HC98-2"/>
    <property type="nucleotide sequence ID" value="NM_001166171.2"/>
</dbReference>
<dbReference type="RefSeq" id="NP_055212.2">
    <molecule id="Q9HC98-1"/>
    <property type="nucleotide sequence ID" value="NM_014397.5"/>
</dbReference>
<dbReference type="RefSeq" id="XP_005251721.1">
    <property type="nucleotide sequence ID" value="XM_005251664.1"/>
</dbReference>
<dbReference type="RefSeq" id="XP_006716999.1">
    <property type="nucleotide sequence ID" value="XM_006716936.2"/>
</dbReference>
<dbReference type="RefSeq" id="XP_016869706.1">
    <molecule id="Q9HC98-2"/>
    <property type="nucleotide sequence ID" value="XM_017014217.2"/>
</dbReference>
<dbReference type="RefSeq" id="XP_024303155.1">
    <molecule id="Q9HC98-1"/>
    <property type="nucleotide sequence ID" value="XM_024447387.2"/>
</dbReference>
<dbReference type="RefSeq" id="XP_047278608.1">
    <molecule id="Q9HC98-2"/>
    <property type="nucleotide sequence ID" value="XM_047422652.1"/>
</dbReference>
<dbReference type="RefSeq" id="XP_047278610.1">
    <molecule id="Q9HC98-2"/>
    <property type="nucleotide sequence ID" value="XM_047422654.1"/>
</dbReference>
<dbReference type="RefSeq" id="XP_054217768.1">
    <molecule id="Q9HC98-2"/>
    <property type="nucleotide sequence ID" value="XM_054361793.1"/>
</dbReference>
<dbReference type="RefSeq" id="XP_054217770.1">
    <molecule id="Q9HC98-2"/>
    <property type="nucleotide sequence ID" value="XM_054361795.1"/>
</dbReference>
<dbReference type="RefSeq" id="XP_054217771.1">
    <molecule id="Q9HC98-1"/>
    <property type="nucleotide sequence ID" value="XM_054361796.1"/>
</dbReference>
<dbReference type="RefSeq" id="XP_054217772.1">
    <molecule id="Q9HC98-1"/>
    <property type="nucleotide sequence ID" value="XM_054361797.1"/>
</dbReference>
<dbReference type="RefSeq" id="XP_054217773.1">
    <molecule id="Q9HC98-1"/>
    <property type="nucleotide sequence ID" value="XM_054361798.1"/>
</dbReference>
<dbReference type="RefSeq" id="XP_054217774.1">
    <molecule id="Q9HC98-1"/>
    <property type="nucleotide sequence ID" value="XM_054361799.1"/>
</dbReference>
<dbReference type="RefSeq" id="XP_054217775.1">
    <molecule id="Q9HC98-1"/>
    <property type="nucleotide sequence ID" value="XM_054361800.1"/>
</dbReference>
<dbReference type="SMR" id="Q9HC98"/>
<dbReference type="BioGRID" id="116000">
    <property type="interactions" value="155"/>
</dbReference>
<dbReference type="FunCoup" id="Q9HC98">
    <property type="interactions" value="1268"/>
</dbReference>
<dbReference type="IntAct" id="Q9HC98">
    <property type="interactions" value="120"/>
</dbReference>
<dbReference type="MINT" id="Q9HC98"/>
<dbReference type="STRING" id="9606.ENSP00000362702"/>
<dbReference type="BindingDB" id="Q9HC98"/>
<dbReference type="ChEMBL" id="CHEMBL4309"/>
<dbReference type="DrugCentral" id="Q9HC98"/>
<dbReference type="TCDB" id="1.I.1.1.3">
    <property type="family name" value="the nuclear pore complex (npc) family"/>
</dbReference>
<dbReference type="iPTMnet" id="Q9HC98"/>
<dbReference type="PhosphoSitePlus" id="Q9HC98"/>
<dbReference type="BioMuta" id="NEK6"/>
<dbReference type="DMDM" id="37537993"/>
<dbReference type="jPOST" id="Q9HC98"/>
<dbReference type="MassIVE" id="Q9HC98"/>
<dbReference type="PaxDb" id="9606-ENSP00000362702"/>
<dbReference type="PeptideAtlas" id="Q9HC98"/>
<dbReference type="ProteomicsDB" id="81659">
    <molecule id="Q9HC98-1"/>
</dbReference>
<dbReference type="ProteomicsDB" id="81660">
    <molecule id="Q9HC98-2"/>
</dbReference>
<dbReference type="ProteomicsDB" id="81661">
    <molecule id="Q9HC98-3"/>
</dbReference>
<dbReference type="ProteomicsDB" id="81662">
    <molecule id="Q9HC98-4"/>
</dbReference>
<dbReference type="Pumba" id="Q9HC98"/>
<dbReference type="Antibodypedia" id="30447">
    <property type="antibodies" value="313 antibodies from 33 providers"/>
</dbReference>
<dbReference type="DNASU" id="10783"/>
<dbReference type="Ensembl" id="ENST00000320246.10">
    <molecule id="Q9HC98-1"/>
    <property type="protein sequence ID" value="ENSP00000319734.5"/>
    <property type="gene ID" value="ENSG00000119408.17"/>
</dbReference>
<dbReference type="Ensembl" id="ENST00000373600.7">
    <molecule id="Q9HC98-2"/>
    <property type="protein sequence ID" value="ENSP00000362702.3"/>
    <property type="gene ID" value="ENSG00000119408.17"/>
</dbReference>
<dbReference type="Ensembl" id="ENST00000373603.5">
    <molecule id="Q9HC98-1"/>
    <property type="protein sequence ID" value="ENSP00000362705.1"/>
    <property type="gene ID" value="ENSG00000119408.17"/>
</dbReference>
<dbReference type="Ensembl" id="ENST00000394199.6">
    <molecule id="Q9HC98-2"/>
    <property type="protein sequence ID" value="ENSP00000377749.2"/>
    <property type="gene ID" value="ENSG00000119408.17"/>
</dbReference>
<dbReference type="Ensembl" id="ENST00000539416.5">
    <molecule id="Q9HC98-4"/>
    <property type="protein sequence ID" value="ENSP00000439651.1"/>
    <property type="gene ID" value="ENSG00000119408.17"/>
</dbReference>
<dbReference type="Ensembl" id="ENST00000540326.5">
    <molecule id="Q9HC98-3"/>
    <property type="protein sequence ID" value="ENSP00000441469.1"/>
    <property type="gene ID" value="ENSG00000119408.17"/>
</dbReference>
<dbReference type="Ensembl" id="ENST00000545174.5">
    <molecule id="Q9HC98-1"/>
    <property type="protein sequence ID" value="ENSP00000442636.1"/>
    <property type="gene ID" value="ENSG00000119408.17"/>
</dbReference>
<dbReference type="Ensembl" id="ENST00000546191.5">
    <molecule id="Q9HC98-1"/>
    <property type="protein sequence ID" value="ENSP00000441426.1"/>
    <property type="gene ID" value="ENSG00000119408.17"/>
</dbReference>
<dbReference type="GeneID" id="10783"/>
<dbReference type="KEGG" id="hsa:10783"/>
<dbReference type="MANE-Select" id="ENST00000320246.10">
    <property type="protein sequence ID" value="ENSP00000319734.5"/>
    <property type="RefSeq nucleotide sequence ID" value="NM_014397.6"/>
    <property type="RefSeq protein sequence ID" value="NP_055212.2"/>
</dbReference>
<dbReference type="UCSC" id="uc004bof.4">
    <molecule id="Q9HC98-1"/>
    <property type="organism name" value="human"/>
</dbReference>
<dbReference type="AGR" id="HGNC:7749"/>
<dbReference type="CTD" id="10783"/>
<dbReference type="DisGeNET" id="10783"/>
<dbReference type="GeneCards" id="NEK6"/>
<dbReference type="HGNC" id="HGNC:7749">
    <property type="gene designation" value="NEK6"/>
</dbReference>
<dbReference type="HPA" id="ENSG00000119408">
    <property type="expression patterns" value="Tissue enhanced (liver)"/>
</dbReference>
<dbReference type="MalaCards" id="NEK6"/>
<dbReference type="MIM" id="604884">
    <property type="type" value="gene"/>
</dbReference>
<dbReference type="neXtProt" id="NX_Q9HC98"/>
<dbReference type="OpenTargets" id="ENSG00000119408"/>
<dbReference type="PharmGKB" id="PA31550"/>
<dbReference type="VEuPathDB" id="HostDB:ENSG00000119408"/>
<dbReference type="eggNOG" id="KOG0591">
    <property type="taxonomic scope" value="Eukaryota"/>
</dbReference>
<dbReference type="GeneTree" id="ENSGT00940000159990"/>
<dbReference type="InParanoid" id="Q9HC98"/>
<dbReference type="OrthoDB" id="248923at2759"/>
<dbReference type="PAN-GO" id="Q9HC98">
    <property type="GO annotations" value="5 GO annotations based on evolutionary models"/>
</dbReference>
<dbReference type="PhylomeDB" id="Q9HC98"/>
<dbReference type="TreeFam" id="TF101021"/>
<dbReference type="PathwayCommons" id="Q9HC98"/>
<dbReference type="Reactome" id="R-HSA-2980767">
    <property type="pathway name" value="Activation of NIMA Kinases NEK9, NEK6, NEK7"/>
</dbReference>
<dbReference type="Reactome" id="R-HSA-3301854">
    <property type="pathway name" value="Nuclear Pore Complex (NPC) Disassembly"/>
</dbReference>
<dbReference type="Reactome" id="R-HSA-9648025">
    <property type="pathway name" value="EML4 and NUDC in mitotic spindle formation"/>
</dbReference>
<dbReference type="SignaLink" id="Q9HC98"/>
<dbReference type="SIGNOR" id="Q9HC98"/>
<dbReference type="BioGRID-ORCS" id="10783">
    <property type="hits" value="26 hits in 1195 CRISPR screens"/>
</dbReference>
<dbReference type="CD-CODE" id="8C2F96ED">
    <property type="entry name" value="Centrosome"/>
</dbReference>
<dbReference type="ChiTaRS" id="NEK6">
    <property type="organism name" value="human"/>
</dbReference>
<dbReference type="GeneWiki" id="NEK6"/>
<dbReference type="GenomeRNAi" id="10783"/>
<dbReference type="Pharos" id="Q9HC98">
    <property type="development level" value="Tchem"/>
</dbReference>
<dbReference type="PRO" id="PR:Q9HC98"/>
<dbReference type="Proteomes" id="UP000005640">
    <property type="component" value="Chromosome 9"/>
</dbReference>
<dbReference type="RNAct" id="Q9HC98">
    <property type="molecule type" value="protein"/>
</dbReference>
<dbReference type="Bgee" id="ENSG00000119408">
    <property type="expression patterns" value="Expressed in sural nerve and 155 other cell types or tissues"/>
</dbReference>
<dbReference type="ExpressionAtlas" id="Q9HC98">
    <property type="expression patterns" value="baseline and differential"/>
</dbReference>
<dbReference type="GO" id="GO:0034451">
    <property type="term" value="C:centriolar satellite"/>
    <property type="evidence" value="ECO:0000314"/>
    <property type="project" value="HPA"/>
</dbReference>
<dbReference type="GO" id="GO:0005737">
    <property type="term" value="C:cytoplasm"/>
    <property type="evidence" value="ECO:0000314"/>
    <property type="project" value="UniProtKB"/>
</dbReference>
<dbReference type="GO" id="GO:0005829">
    <property type="term" value="C:cytosol"/>
    <property type="evidence" value="ECO:0000314"/>
    <property type="project" value="HPA"/>
</dbReference>
<dbReference type="GO" id="GO:0005874">
    <property type="term" value="C:microtubule"/>
    <property type="evidence" value="ECO:0007669"/>
    <property type="project" value="UniProtKB-KW"/>
</dbReference>
<dbReference type="GO" id="GO:0016607">
    <property type="term" value="C:nuclear speck"/>
    <property type="evidence" value="ECO:0007669"/>
    <property type="project" value="UniProtKB-SubCell"/>
</dbReference>
<dbReference type="GO" id="GO:0005654">
    <property type="term" value="C:nucleoplasm"/>
    <property type="evidence" value="ECO:0000314"/>
    <property type="project" value="HPA"/>
</dbReference>
<dbReference type="GO" id="GO:0005634">
    <property type="term" value="C:nucleus"/>
    <property type="evidence" value="ECO:0000314"/>
    <property type="project" value="UniProtKB"/>
</dbReference>
<dbReference type="GO" id="GO:0032991">
    <property type="term" value="C:protein-containing complex"/>
    <property type="evidence" value="ECO:0000314"/>
    <property type="project" value="UniProtKB"/>
</dbReference>
<dbReference type="GO" id="GO:0000922">
    <property type="term" value="C:spindle pole"/>
    <property type="evidence" value="ECO:0007669"/>
    <property type="project" value="UniProtKB-SubCell"/>
</dbReference>
<dbReference type="GO" id="GO:0005524">
    <property type="term" value="F:ATP binding"/>
    <property type="evidence" value="ECO:0000314"/>
    <property type="project" value="UniProtKB"/>
</dbReference>
<dbReference type="GO" id="GO:0140297">
    <property type="term" value="F:DNA-binding transcription factor binding"/>
    <property type="evidence" value="ECO:0000353"/>
    <property type="project" value="UniProtKB"/>
</dbReference>
<dbReference type="GO" id="GO:0019894">
    <property type="term" value="F:kinesin binding"/>
    <property type="evidence" value="ECO:0000353"/>
    <property type="project" value="UniProtKB"/>
</dbReference>
<dbReference type="GO" id="GO:0000287">
    <property type="term" value="F:magnesium ion binding"/>
    <property type="evidence" value="ECO:0000314"/>
    <property type="project" value="UniProtKB"/>
</dbReference>
<dbReference type="GO" id="GO:0019901">
    <property type="term" value="F:protein kinase binding"/>
    <property type="evidence" value="ECO:0000353"/>
    <property type="project" value="UniProtKB"/>
</dbReference>
<dbReference type="GO" id="GO:0106310">
    <property type="term" value="F:protein serine kinase activity"/>
    <property type="evidence" value="ECO:0007669"/>
    <property type="project" value="RHEA"/>
</dbReference>
<dbReference type="GO" id="GO:0004674">
    <property type="term" value="F:protein serine/threonine kinase activity"/>
    <property type="evidence" value="ECO:0000314"/>
    <property type="project" value="UniProtKB"/>
</dbReference>
<dbReference type="GO" id="GO:0001222">
    <property type="term" value="F:transcription corepressor binding"/>
    <property type="evidence" value="ECO:0000353"/>
    <property type="project" value="UniProtKB"/>
</dbReference>
<dbReference type="GO" id="GO:0031625">
    <property type="term" value="F:ubiquitin protein ligase binding"/>
    <property type="evidence" value="ECO:0000353"/>
    <property type="project" value="UniProtKB"/>
</dbReference>
<dbReference type="GO" id="GO:0006915">
    <property type="term" value="P:apoptotic process"/>
    <property type="evidence" value="ECO:0007669"/>
    <property type="project" value="UniProtKB-KW"/>
</dbReference>
<dbReference type="GO" id="GO:0051301">
    <property type="term" value="P:cell division"/>
    <property type="evidence" value="ECO:0007669"/>
    <property type="project" value="UniProtKB-KW"/>
</dbReference>
<dbReference type="GO" id="GO:0007059">
    <property type="term" value="P:chromosome segregation"/>
    <property type="evidence" value="ECO:0000314"/>
    <property type="project" value="UniProtKB"/>
</dbReference>
<dbReference type="GO" id="GO:0007077">
    <property type="term" value="P:mitotic nuclear membrane disassembly"/>
    <property type="evidence" value="ECO:0000304"/>
    <property type="project" value="Reactome"/>
</dbReference>
<dbReference type="GO" id="GO:0007052">
    <property type="term" value="P:mitotic spindle organization"/>
    <property type="evidence" value="ECO:0000304"/>
    <property type="project" value="Reactome"/>
</dbReference>
<dbReference type="GO" id="GO:0018105">
    <property type="term" value="P:peptidyl-serine phosphorylation"/>
    <property type="evidence" value="ECO:0000314"/>
    <property type="project" value="UniProtKB"/>
</dbReference>
<dbReference type="GO" id="GO:0043123">
    <property type="term" value="P:positive regulation of canonical NF-kappaB signal transduction"/>
    <property type="evidence" value="ECO:0007001"/>
    <property type="project" value="UniProtKB"/>
</dbReference>
<dbReference type="GO" id="GO:0046777">
    <property type="term" value="P:protein autophosphorylation"/>
    <property type="evidence" value="ECO:0000314"/>
    <property type="project" value="UniProtKB"/>
</dbReference>
<dbReference type="GO" id="GO:0006468">
    <property type="term" value="P:protein phosphorylation"/>
    <property type="evidence" value="ECO:0000314"/>
    <property type="project" value="UniProtKB"/>
</dbReference>
<dbReference type="GO" id="GO:2000772">
    <property type="term" value="P:regulation of cellular senescence"/>
    <property type="evidence" value="ECO:0000304"/>
    <property type="project" value="UniProtKB"/>
</dbReference>
<dbReference type="GO" id="GO:0007346">
    <property type="term" value="P:regulation of mitotic cell cycle"/>
    <property type="evidence" value="ECO:0000304"/>
    <property type="project" value="UniProtKB"/>
</dbReference>
<dbReference type="GO" id="GO:0030071">
    <property type="term" value="P:regulation of mitotic metaphase/anaphase transition"/>
    <property type="evidence" value="ECO:0000314"/>
    <property type="project" value="UniProtKB"/>
</dbReference>
<dbReference type="GO" id="GO:0051225">
    <property type="term" value="P:spindle assembly"/>
    <property type="evidence" value="ECO:0000304"/>
    <property type="project" value="UniProtKB"/>
</dbReference>
<dbReference type="CDD" id="cd08228">
    <property type="entry name" value="STKc_Nek6"/>
    <property type="match status" value="1"/>
</dbReference>
<dbReference type="FunFam" id="1.10.510.10:FF:000148">
    <property type="entry name" value="Serine/threonine-protein kinase Nek7"/>
    <property type="match status" value="1"/>
</dbReference>
<dbReference type="FunFam" id="3.30.200.20:FF:000204">
    <property type="entry name" value="Serine/threonine-protein kinase Nek7"/>
    <property type="match status" value="1"/>
</dbReference>
<dbReference type="FunFam" id="3.30.200.20:FF:000240">
    <property type="entry name" value="Serine/threonine-protein kinase Nek7"/>
    <property type="match status" value="1"/>
</dbReference>
<dbReference type="Gene3D" id="3.30.200.20">
    <property type="entry name" value="Phosphorylase Kinase, domain 1"/>
    <property type="match status" value="1"/>
</dbReference>
<dbReference type="Gene3D" id="1.10.510.10">
    <property type="entry name" value="Transferase(Phosphotransferase) domain 1"/>
    <property type="match status" value="1"/>
</dbReference>
<dbReference type="InterPro" id="IPR011009">
    <property type="entry name" value="Kinase-like_dom_sf"/>
</dbReference>
<dbReference type="InterPro" id="IPR000719">
    <property type="entry name" value="Prot_kinase_dom"/>
</dbReference>
<dbReference type="InterPro" id="IPR017441">
    <property type="entry name" value="Protein_kinase_ATP_BS"/>
</dbReference>
<dbReference type="InterPro" id="IPR001245">
    <property type="entry name" value="Ser-Thr/Tyr_kinase_cat_dom"/>
</dbReference>
<dbReference type="InterPro" id="IPR008271">
    <property type="entry name" value="Ser/Thr_kinase_AS"/>
</dbReference>
<dbReference type="PANTHER" id="PTHR43289">
    <property type="entry name" value="MITOGEN-ACTIVATED PROTEIN KINASE KINASE KINASE 20-RELATED"/>
    <property type="match status" value="1"/>
</dbReference>
<dbReference type="PANTHER" id="PTHR43289:SF13">
    <property type="entry name" value="MITOGEN-ACTIVATED PROTEIN KINASE KINASE KINASE 20-RELATED"/>
    <property type="match status" value="1"/>
</dbReference>
<dbReference type="Pfam" id="PF00069">
    <property type="entry name" value="Pkinase"/>
    <property type="match status" value="1"/>
</dbReference>
<dbReference type="PIRSF" id="PIRSF000654">
    <property type="entry name" value="Integrin-linked_kinase"/>
    <property type="match status" value="1"/>
</dbReference>
<dbReference type="PRINTS" id="PR00109">
    <property type="entry name" value="TYRKINASE"/>
</dbReference>
<dbReference type="SMART" id="SM00220">
    <property type="entry name" value="S_TKc"/>
    <property type="match status" value="1"/>
</dbReference>
<dbReference type="SUPFAM" id="SSF56112">
    <property type="entry name" value="Protein kinase-like (PK-like)"/>
    <property type="match status" value="1"/>
</dbReference>
<dbReference type="PROSITE" id="PS00107">
    <property type="entry name" value="PROTEIN_KINASE_ATP"/>
    <property type="match status" value="1"/>
</dbReference>
<dbReference type="PROSITE" id="PS50011">
    <property type="entry name" value="PROTEIN_KINASE_DOM"/>
    <property type="match status" value="1"/>
</dbReference>
<dbReference type="PROSITE" id="PS00108">
    <property type="entry name" value="PROTEIN_KINASE_ST"/>
    <property type="match status" value="1"/>
</dbReference>
<protein>
    <recommendedName>
        <fullName evidence="22">Serine/threonine-protein kinase Nek6</fullName>
        <ecNumber evidence="5 8 12">2.7.11.34</ecNumber>
    </recommendedName>
    <alternativeName>
        <fullName>Never in mitosis A-related kinase 6</fullName>
        <shortName>NimA-related protein kinase 6</shortName>
    </alternativeName>
    <alternativeName>
        <fullName>Protein kinase SID6-1512</fullName>
    </alternativeName>
</protein>
<gene>
    <name evidence="25" type="primary">NEK6</name>
</gene>
<organism>
    <name type="scientific">Homo sapiens</name>
    <name type="common">Human</name>
    <dbReference type="NCBI Taxonomy" id="9606"/>
    <lineage>
        <taxon>Eukaryota</taxon>
        <taxon>Metazoa</taxon>
        <taxon>Chordata</taxon>
        <taxon>Craniata</taxon>
        <taxon>Vertebrata</taxon>
        <taxon>Euteleostomi</taxon>
        <taxon>Mammalia</taxon>
        <taxon>Eutheria</taxon>
        <taxon>Euarchontoglires</taxon>
        <taxon>Primates</taxon>
        <taxon>Haplorrhini</taxon>
        <taxon>Catarrhini</taxon>
        <taxon>Hominidae</taxon>
        <taxon>Homo</taxon>
    </lineage>
</organism>
<feature type="chain" id="PRO_0000086427" description="Serine/threonine-protein kinase Nek6">
    <location>
        <begin position="1"/>
        <end position="313"/>
    </location>
</feature>
<feature type="domain" description="Protein kinase" evidence="2">
    <location>
        <begin position="45"/>
        <end position="310"/>
    </location>
</feature>
<feature type="region of interest" description="Interaction with ARHGAP33, ANKRA2, CDC42, PRDX3, RAD26L, RBBP6, RPS7 and TRIP4" evidence="16">
    <location>
        <begin position="1"/>
        <end position="44"/>
    </location>
</feature>
<feature type="region of interest" description="Disordered" evidence="4">
    <location>
        <begin position="1"/>
        <end position="32"/>
    </location>
</feature>
<feature type="region of interest" description="Interaction with APBB1" evidence="10">
    <location>
        <begin position="267"/>
        <end position="270"/>
    </location>
</feature>
<feature type="active site" description="Proton acceptor" evidence="2 3">
    <location>
        <position position="172"/>
    </location>
</feature>
<feature type="binding site" evidence="2">
    <location>
        <begin position="51"/>
        <end position="59"/>
    </location>
    <ligand>
        <name>ATP</name>
        <dbReference type="ChEBI" id="CHEBI:30616"/>
    </ligand>
</feature>
<feature type="binding site" evidence="2">
    <location>
        <position position="74"/>
    </location>
    <ligand>
        <name>ATP</name>
        <dbReference type="ChEBI" id="CHEBI:30616"/>
    </ligand>
</feature>
<feature type="site" description="Autoinhibitory">
    <location>
        <position position="108"/>
    </location>
</feature>
<feature type="modified residue" description="Phosphoserine" evidence="7">
    <location>
        <position position="37"/>
    </location>
</feature>
<feature type="modified residue" description="Phosphothreonine" evidence="7">
    <location>
        <position position="202"/>
    </location>
</feature>
<feature type="modified residue" description="Phosphoserine; by NEK9" evidence="7 16 26 27">
    <location>
        <position position="206"/>
    </location>
</feature>
<feature type="modified residue" description="Phosphothreonine" evidence="10">
    <location>
        <position position="210"/>
    </location>
</feature>
<feature type="splice variant" id="VSP_041798" description="In isoform 2." evidence="20">
    <original>M</original>
    <variation>MPRREVCWEAAHFRQEEQSLPRPRVRALVRLACRM</variation>
    <location>
        <position position="1"/>
    </location>
</feature>
<feature type="splice variant" id="VSP_041799" description="In isoform 3." evidence="20">
    <original>M</original>
    <variation>MGRRRPAPFRALVRLACRM</variation>
    <location>
        <position position="1"/>
    </location>
</feature>
<feature type="splice variant" id="VSP_041800" description="In isoform 4." evidence="19">
    <original>M</original>
    <variation>MEATGWDSRCSPGTQVRALVRLACRM</variation>
    <location>
        <position position="1"/>
    </location>
</feature>
<feature type="mutagenesis site" description="Loss of autophosphorylation and of kinase activity and induction of apoptosis; when associated with M-75." evidence="8 12">
    <original>K</original>
    <variation>M</variation>
    <location>
        <position position="74"/>
    </location>
</feature>
<feature type="mutagenesis site" description="Loss of autophosphorylation and of kinase activity and induction of apoptosis; when associated with M-74." evidence="8 12">
    <original>K</original>
    <variation>M</variation>
    <location>
        <position position="75"/>
    </location>
</feature>
<feature type="mutagenesis site" description="Increase in catalytic activity." evidence="14">
    <original>Y</original>
    <variation>A</variation>
    <location>
        <position position="108"/>
    </location>
</feature>
<feature type="sequence conflict" description="In Ref. 7; CAG33372." evidence="21" ref="7">
    <original>Q</original>
    <variation>W</variation>
    <location>
        <position position="88"/>
    </location>
</feature>
<keyword id="KW-0025">Alternative splicing</keyword>
<keyword id="KW-0053">Apoptosis</keyword>
<keyword id="KW-0067">ATP-binding</keyword>
<keyword id="KW-0131">Cell cycle</keyword>
<keyword id="KW-0132">Cell division</keyword>
<keyword id="KW-0159">Chromosome partition</keyword>
<keyword id="KW-0963">Cytoplasm</keyword>
<keyword id="KW-0206">Cytoskeleton</keyword>
<keyword id="KW-0418">Kinase</keyword>
<keyword id="KW-0460">Magnesium</keyword>
<keyword id="KW-0479">Metal-binding</keyword>
<keyword id="KW-0493">Microtubule</keyword>
<keyword id="KW-0498">Mitosis</keyword>
<keyword id="KW-0547">Nucleotide-binding</keyword>
<keyword id="KW-0539">Nucleus</keyword>
<keyword id="KW-0597">Phosphoprotein</keyword>
<keyword id="KW-1267">Proteomics identification</keyword>
<keyword id="KW-1185">Reference proteome</keyword>
<keyword id="KW-0723">Serine/threonine-protein kinase</keyword>
<keyword id="KW-0808">Transferase</keyword>
<accession>Q9HC98</accession>
<accession>B7Z2D9</accession>
<accession>Q5TBG3</accession>
<accession>Q5TBG9</accession>
<accession>Q6FG86</accession>
<accession>Q6IAR3</accession>
<accession>Q96E83</accession>
<accession>Q9ULX2</accession>
<name>NEK6_HUMAN</name>
<comment type="function">
    <text evidence="5 6 8 11 12 13 16 17 18">Protein kinase which plays an important role in mitotic cell cycle progression (PubMed:11516946, PubMed:14563848). Required for chromosome segregation at metaphase-anaphase transition, robust mitotic spindle formation and cytokinesis (PubMed:19414596). Phosphorylates ATF4, CIR1, PTN, RAD26L, RBBP6, RPS7, RPS6KB1, TRIP4, STAT3 and histones H1 and H3 (PubMed:12054534, PubMed:20873783). Phosphorylates KIF11 to promote mitotic spindle formation (PubMed:19001501). Involved in G2/M phase cell cycle arrest induced by DNA damage (PubMed:18728393). Inhibition of activity results in apoptosis. May contribute to tumorigenesis by suppressing p53/TP53-induced cancer cell senescence (PubMed:21099361). Phosphorylates EML4 at 'Ser-144', promoting its dissociation from microtubules during mitosis which is required for efficient chromosome congression (PubMed:31409757).</text>
</comment>
<comment type="catalytic activity">
    <reaction evidence="5 8 12">
        <text>L-seryl-[protein] + ATP = O-phospho-L-seryl-[protein] + ADP + H(+)</text>
        <dbReference type="Rhea" id="RHEA:17989"/>
        <dbReference type="Rhea" id="RHEA-COMP:9863"/>
        <dbReference type="Rhea" id="RHEA-COMP:11604"/>
        <dbReference type="ChEBI" id="CHEBI:15378"/>
        <dbReference type="ChEBI" id="CHEBI:29999"/>
        <dbReference type="ChEBI" id="CHEBI:30616"/>
        <dbReference type="ChEBI" id="CHEBI:83421"/>
        <dbReference type="ChEBI" id="CHEBI:456216"/>
        <dbReference type="EC" id="2.7.11.34"/>
    </reaction>
</comment>
<comment type="catalytic activity">
    <reaction evidence="5 8 12">
        <text>L-threonyl-[protein] + ATP = O-phospho-L-threonyl-[protein] + ADP + H(+)</text>
        <dbReference type="Rhea" id="RHEA:46608"/>
        <dbReference type="Rhea" id="RHEA-COMP:11060"/>
        <dbReference type="Rhea" id="RHEA-COMP:11605"/>
        <dbReference type="ChEBI" id="CHEBI:15378"/>
        <dbReference type="ChEBI" id="CHEBI:30013"/>
        <dbReference type="ChEBI" id="CHEBI:30616"/>
        <dbReference type="ChEBI" id="CHEBI:61977"/>
        <dbReference type="ChEBI" id="CHEBI:456216"/>
        <dbReference type="EC" id="2.7.11.34"/>
    </reaction>
</comment>
<comment type="cofactor">
    <cofactor evidence="23">
        <name>Mg(2+)</name>
        <dbReference type="ChEBI" id="CHEBI:18420"/>
    </cofactor>
</comment>
<comment type="activity regulation">
    <text evidence="14">Binding to NEK9 stimulates its activity by releasing the autoinhibitory function of Tyr-108.</text>
</comment>
<comment type="subunit">
    <text evidence="1 9 10 12 13 16">Interacts with STAT3 and RPS6KB1 (By similarity). Interacts with NEK9, predominantly in mitosis. Interacts with KIF11 (via C-terminus). Interacts with APBB1 (via WW domain). Interacts with ANKRA2, ATF4, ARHGAP33, CDC42, CIR1, PRAM1, PTN, PRDX3, PIN1, RAD26L, RBBP6, RPS7 and TRIP4.</text>
</comment>
<comment type="interaction">
    <interactant intactId="EBI-740364">
        <id>Q9HC98</id>
    </interactant>
    <interactant intactId="EBI-742664">
        <id>Q9BPX1</id>
        <label>HSD17B14</label>
    </interactant>
    <organismsDiffer>false</organismsDiffer>
    <experiments>3</experiments>
</comment>
<comment type="interaction">
    <interactant intactId="EBI-740364">
        <id>Q9HC98</id>
    </interactant>
    <interactant intactId="EBI-8638439">
        <id>Q8IYA8</id>
        <label>IHO1</label>
    </interactant>
    <organismsDiffer>false</organismsDiffer>
    <experiments>3</experiments>
</comment>
<comment type="interaction">
    <interactant intactId="EBI-740364">
        <id>Q9HC98</id>
    </interactant>
    <interactant intactId="EBI-745305">
        <id>Q13422</id>
        <label>IKZF1</label>
    </interactant>
    <organismsDiffer>false</organismsDiffer>
    <experiments>3</experiments>
</comment>
<comment type="interaction">
    <interactant intactId="EBI-740364">
        <id>Q9HC98</id>
    </interactant>
    <interactant intactId="EBI-747204">
        <id>Q9UKT9</id>
        <label>IKZF3</label>
    </interactant>
    <organismsDiffer>false</organismsDiffer>
    <experiments>5</experiments>
</comment>
<comment type="interaction">
    <interactant intactId="EBI-740364">
        <id>Q9HC98</id>
    </interactant>
    <interactant intactId="EBI-6509505">
        <id>Q0VD86</id>
        <label>INCA1</label>
    </interactant>
    <organismsDiffer>false</organismsDiffer>
    <experiments>4</experiments>
</comment>
<comment type="interaction">
    <interactant intactId="EBI-740364">
        <id>Q9HC98</id>
    </interactant>
    <interactant intactId="EBI-948001">
        <id>Q15323</id>
        <label>KRT31</label>
    </interactant>
    <organismsDiffer>false</organismsDiffer>
    <experiments>3</experiments>
</comment>
<comment type="interaction">
    <interactant intactId="EBI-740364">
        <id>Q9HC98</id>
    </interactant>
    <interactant intactId="EBI-10171697">
        <id>Q6A162</id>
        <label>KRT40</label>
    </interactant>
    <organismsDiffer>false</organismsDiffer>
    <experiments>3</experiments>
</comment>
<comment type="interaction">
    <interactant intactId="EBI-740364">
        <id>Q9HC98</id>
    </interactant>
    <interactant intactId="EBI-739832">
        <id>Q8TBB1</id>
        <label>LNX1</label>
    </interactant>
    <organismsDiffer>false</organismsDiffer>
    <experiments>3</experiments>
</comment>
<comment type="interaction">
    <interactant intactId="EBI-740364">
        <id>Q9HC98</id>
    </interactant>
    <interactant intactId="EBI-741037">
        <id>Q9BRK4</id>
        <label>LZTS2</label>
    </interactant>
    <organismsDiffer>false</organismsDiffer>
    <experiments>3</experiments>
</comment>
<comment type="interaction">
    <interactant intactId="EBI-740364">
        <id>Q9HC98</id>
    </interactant>
    <interactant intactId="EBI-10172876">
        <id>Q7Z6G3-2</id>
        <label>NECAB2</label>
    </interactant>
    <organismsDiffer>false</organismsDiffer>
    <experiments>3</experiments>
</comment>
<comment type="interaction">
    <interactant intactId="EBI-740364">
        <id>Q9HC98</id>
    </interactant>
    <interactant intactId="EBI-1044009">
        <id>Q8TD19</id>
        <label>NEK9</label>
    </interactant>
    <organismsDiffer>false</organismsDiffer>
    <experiments>4</experiments>
</comment>
<comment type="interaction">
    <interactant intactId="EBI-740364">
        <id>Q9HC98</id>
    </interactant>
    <interactant intactId="EBI-714158">
        <id>Q13526</id>
        <label>PIN1</label>
    </interactant>
    <organismsDiffer>false</organismsDiffer>
    <experiments>3</experiments>
</comment>
<comment type="interaction">
    <interactant intactId="EBI-740364">
        <id>Q9HC98</id>
    </interactant>
    <interactant intactId="EBI-10172380">
        <id>Q5VWN6-2</id>
        <label>TASOR2</label>
    </interactant>
    <organismsDiffer>false</organismsDiffer>
    <experiments>3</experiments>
</comment>
<comment type="interaction">
    <interactant intactId="EBI-740364">
        <id>Q9HC98</id>
    </interactant>
    <interactant intactId="EBI-533224">
        <id>P15884</id>
        <label>TCF4</label>
    </interactant>
    <organismsDiffer>false</organismsDiffer>
    <experiments>4</experiments>
</comment>
<comment type="interaction">
    <interactant intactId="EBI-740364">
        <id>Q9HC98</id>
    </interactant>
    <interactant intactId="EBI-717810">
        <id>Q08117</id>
        <label>TLE5</label>
    </interactant>
    <organismsDiffer>false</organismsDiffer>
    <experiments>3</experiments>
</comment>
<comment type="interaction">
    <interactant intactId="EBI-740364">
        <id>Q9HC98</id>
    </interactant>
    <interactant intactId="EBI-603457">
        <id>Q07912</id>
        <label>TNK2</label>
    </interactant>
    <organismsDiffer>false</organismsDiffer>
    <experiments>3</experiments>
</comment>
<comment type="interaction">
    <interactant intactId="EBI-740364">
        <id>Q9HC98</id>
    </interactant>
    <interactant intactId="EBI-740098">
        <id>P36406</id>
        <label>TRIM23</label>
    </interactant>
    <organismsDiffer>false</organismsDiffer>
    <experiments>4</experiments>
</comment>
<comment type="interaction">
    <interactant intactId="EBI-740364">
        <id>Q9HC98</id>
    </interactant>
    <interactant intactId="EBI-719493">
        <id>P14373</id>
        <label>TRIM27</label>
    </interactant>
    <organismsDiffer>false</organismsDiffer>
    <experiments>3</experiments>
</comment>
<comment type="interaction">
    <interactant intactId="EBI-740364">
        <id>Q9HC98</id>
    </interactant>
    <interactant intactId="EBI-517127">
        <id>P98170</id>
        <label>XIAP</label>
    </interactant>
    <organismsDiffer>false</organismsDiffer>
    <experiments>4</experiments>
</comment>
<comment type="interaction">
    <interactant intactId="EBI-11750983">
        <id>Q9HC98-4</id>
    </interactant>
    <interactant intactId="EBI-10181188">
        <id>Q8N7W2-2</id>
        <label>BEND7</label>
    </interactant>
    <organismsDiffer>false</organismsDiffer>
    <experiments>3</experiments>
</comment>
<comment type="interaction">
    <interactant intactId="EBI-11750983">
        <id>Q9HC98-4</id>
    </interactant>
    <interactant intactId="EBI-711810">
        <id>O14503</id>
        <label>BHLHE40</label>
    </interactant>
    <organismsDiffer>false</organismsDiffer>
    <experiments>3</experiments>
</comment>
<comment type="interaction">
    <interactant intactId="EBI-11750983">
        <id>Q9HC98-4</id>
    </interactant>
    <interactant intactId="EBI-1049597">
        <id>P27797</id>
        <label>CALR</label>
    </interactant>
    <organismsDiffer>false</organismsDiffer>
    <experiments>3</experiments>
</comment>
<comment type="interaction">
    <interactant intactId="EBI-11750983">
        <id>Q9HC98-4</id>
    </interactant>
    <interactant intactId="EBI-11524851">
        <id>Q8NA61-2</id>
        <label>CBY2</label>
    </interactant>
    <organismsDiffer>false</organismsDiffer>
    <experiments>3</experiments>
</comment>
<comment type="interaction">
    <interactant intactId="EBI-11750983">
        <id>Q9HC98-4</id>
    </interactant>
    <interactant intactId="EBI-744556">
        <id>Q96HB5</id>
        <label>CCDC120</label>
    </interactant>
    <organismsDiffer>false</organismsDiffer>
    <experiments>3</experiments>
</comment>
<comment type="interaction">
    <interactant intactId="EBI-11750983">
        <id>Q9HC98-4</id>
    </interactant>
    <interactant intactId="EBI-727477">
        <id>P12830</id>
        <label>CDH1</label>
    </interactant>
    <organismsDiffer>false</organismsDiffer>
    <experiments>3</experiments>
</comment>
<comment type="interaction">
    <interactant intactId="EBI-11750983">
        <id>Q9HC98-4</id>
    </interactant>
    <interactant intactId="EBI-746189">
        <id>Q15078</id>
        <label>CDK5R1</label>
    </interactant>
    <organismsDiffer>false</organismsDiffer>
    <experiments>3</experiments>
</comment>
<comment type="interaction">
    <interactant intactId="EBI-11750983">
        <id>Q9HC98-4</id>
    </interactant>
    <interactant intactId="EBI-742887">
        <id>Q8TAP6</id>
        <label>CEP76</label>
    </interactant>
    <organismsDiffer>false</organismsDiffer>
    <experiments>3</experiments>
</comment>
<comment type="interaction">
    <interactant intactId="EBI-11750983">
        <id>Q9HC98-4</id>
    </interactant>
    <interactant intactId="EBI-9038570">
        <id>P27918</id>
        <label>CFP</label>
    </interactant>
    <organismsDiffer>false</organismsDiffer>
    <experiments>3</experiments>
</comment>
<comment type="interaction">
    <interactant intactId="EBI-11750983">
        <id>Q9HC98-4</id>
    </interactant>
    <interactant intactId="EBI-3866319">
        <id>Q9Y2V7</id>
        <label>COG6</label>
    </interactant>
    <organismsDiffer>false</organismsDiffer>
    <experiments>3</experiments>
</comment>
<comment type="interaction">
    <interactant intactId="EBI-11750983">
        <id>Q9HC98-4</id>
    </interactant>
    <interactant intactId="EBI-10171902">
        <id>P56545-3</id>
        <label>CTBP2</label>
    </interactant>
    <organismsDiffer>false</organismsDiffer>
    <experiments>3</experiments>
</comment>
<comment type="interaction">
    <interactant intactId="EBI-11750983">
        <id>Q9HC98-4</id>
    </interactant>
    <interactant intactId="EBI-742054">
        <id>Q96D03</id>
        <label>DDIT4L</label>
    </interactant>
    <organismsDiffer>false</organismsDiffer>
    <experiments>3</experiments>
</comment>
<comment type="interaction">
    <interactant intactId="EBI-11750983">
        <id>Q9HC98-4</id>
    </interactant>
    <interactant intactId="EBI-1055572">
        <id>P17661</id>
        <label>DES</label>
    </interactant>
    <organismsDiffer>false</organismsDiffer>
    <experiments>3</experiments>
</comment>
<comment type="interaction">
    <interactant intactId="EBI-11750983">
        <id>Q9HC98-4</id>
    </interactant>
    <interactant intactId="EBI-351007">
        <id>P36957</id>
        <label>DLST</label>
    </interactant>
    <organismsDiffer>false</organismsDiffer>
    <experiments>3</experiments>
</comment>
<comment type="interaction">
    <interactant intactId="EBI-11750983">
        <id>Q9HC98-4</id>
    </interactant>
    <interactant intactId="EBI-10237931">
        <id>Q9BQC3</id>
        <label>DPH2</label>
    </interactant>
    <organismsDiffer>false</organismsDiffer>
    <experiments>3</experiments>
</comment>
<comment type="interaction">
    <interactant intactId="EBI-11750983">
        <id>Q9HC98-4</id>
    </interactant>
    <interactant intactId="EBI-2349927">
        <id>Q5JST6</id>
        <label>EFHC2</label>
    </interactant>
    <organismsDiffer>false</organismsDiffer>
    <experiments>3</experiments>
</comment>
<comment type="interaction">
    <interactant intactId="EBI-11750983">
        <id>Q9HC98-4</id>
    </interactant>
    <interactant intactId="EBI-12871772">
        <id>Q7Z4H9</id>
        <label>FAM220A</label>
    </interactant>
    <organismsDiffer>false</organismsDiffer>
    <experiments>3</experiments>
</comment>
<comment type="interaction">
    <interactant intactId="EBI-11750983">
        <id>Q9HC98-4</id>
    </interactant>
    <interactant intactId="EBI-750641">
        <id>Q5TD97</id>
        <label>FHL5</label>
    </interactant>
    <organismsDiffer>false</organismsDiffer>
    <experiments>3</experiments>
</comment>
<comment type="interaction">
    <interactant intactId="EBI-11750983">
        <id>Q9HC98-4</id>
    </interactant>
    <interactant intactId="EBI-523002">
        <id>Q9UPW0</id>
        <label>FOXJ3</label>
    </interactant>
    <organismsDiffer>false</organismsDiffer>
    <experiments>3</experiments>
</comment>
<comment type="interaction">
    <interactant intactId="EBI-11750983">
        <id>Q9HC98-4</id>
    </interactant>
    <interactant intactId="EBI-744302">
        <id>P14136</id>
        <label>GFAP</label>
    </interactant>
    <organismsDiffer>false</organismsDiffer>
    <experiments>5</experiments>
</comment>
<comment type="interaction">
    <interactant intactId="EBI-11750983">
        <id>Q9HC98-4</id>
    </interactant>
    <interactant intactId="EBI-947774">
        <id>O75420</id>
        <label>GIGYF1</label>
    </interactant>
    <organismsDiffer>false</organismsDiffer>
    <experiments>3</experiments>
</comment>
<comment type="interaction">
    <interactant intactId="EBI-11750983">
        <id>Q9HC98-4</id>
    </interactant>
    <interactant intactId="EBI-12232117">
        <id>Q8NEA6-2</id>
        <label>GLIS3</label>
    </interactant>
    <organismsDiffer>false</organismsDiffer>
    <experiments>3</experiments>
</comment>
<comment type="interaction">
    <interactant intactId="EBI-11750983">
        <id>Q9HC98-4</id>
    </interactant>
    <interactant intactId="EBI-10268729">
        <id>Q8N9W4-2</id>
        <label>GOLGA6L2</label>
    </interactant>
    <organismsDiffer>false</organismsDiffer>
    <experiments>3</experiments>
</comment>
<comment type="interaction">
    <interactant intactId="EBI-11750983">
        <id>Q9HC98-4</id>
    </interactant>
    <interactant intactId="EBI-12193965">
        <id>Q9Y3R0-3</id>
        <label>GRIP1</label>
    </interactant>
    <organismsDiffer>false</organismsDiffer>
    <experiments>3</experiments>
</comment>
<comment type="interaction">
    <interactant intactId="EBI-11750983">
        <id>Q9HC98-4</id>
    </interactant>
    <interactant intactId="EBI-10961706">
        <id>Q96ED9-2</id>
        <label>HOOK2</label>
    </interactant>
    <organismsDiffer>false</organismsDiffer>
    <experiments>3</experiments>
</comment>
<comment type="interaction">
    <interactant intactId="EBI-11750983">
        <id>Q9HC98-4</id>
    </interactant>
    <interactant intactId="EBI-740785">
        <id>P49639</id>
        <label>HOXA1</label>
    </interactant>
    <organismsDiffer>false</organismsDiffer>
    <experiments>3</experiments>
</comment>
<comment type="interaction">
    <interactant intactId="EBI-11750983">
        <id>Q9HC98-4</id>
    </interactant>
    <interactant intactId="EBI-741308">
        <id>P17509</id>
        <label>HOXB6</label>
    </interactant>
    <organismsDiffer>false</organismsDiffer>
    <experiments>3</experiments>
</comment>
<comment type="interaction">
    <interactant intactId="EBI-11750983">
        <id>Q9HC98-4</id>
    </interactant>
    <interactant intactId="EBI-742664">
        <id>Q9BPX1</id>
        <label>HSD17B14</label>
    </interactant>
    <organismsDiffer>false</organismsDiffer>
    <experiments>3</experiments>
</comment>
<comment type="interaction">
    <interactant intactId="EBI-11750983">
        <id>Q9HC98-4</id>
    </interactant>
    <interactant intactId="EBI-8638439">
        <id>Q8IYA8</id>
        <label>IHO1</label>
    </interactant>
    <organismsDiffer>false</organismsDiffer>
    <experiments>3</experiments>
</comment>
<comment type="interaction">
    <interactant intactId="EBI-11750983">
        <id>Q9HC98-4</id>
    </interactant>
    <interactant intactId="EBI-747204">
        <id>Q9UKT9</id>
        <label>IKZF3</label>
    </interactant>
    <organismsDiffer>false</organismsDiffer>
    <experiments>3</experiments>
</comment>
<comment type="interaction">
    <interactant intactId="EBI-11750983">
        <id>Q9HC98-4</id>
    </interactant>
    <interactant intactId="EBI-6509505">
        <id>Q0VD86</id>
        <label>INCA1</label>
    </interactant>
    <organismsDiffer>false</organismsDiffer>
    <experiments>3</experiments>
</comment>
<comment type="interaction">
    <interactant intactId="EBI-11750983">
        <id>Q9HC98-4</id>
    </interactant>
    <interactant intactId="EBI-715394">
        <id>Q9H079</id>
        <label>KATNBL1</label>
    </interactant>
    <organismsDiffer>false</organismsDiffer>
    <experiments>5</experiments>
</comment>
<comment type="interaction">
    <interactant intactId="EBI-11750983">
        <id>Q9HC98-4</id>
    </interactant>
    <interactant intactId="EBI-3437878">
        <id>Q86T90</id>
        <label>KIAA1328</label>
    </interactant>
    <organismsDiffer>false</organismsDiffer>
    <experiments>3</experiments>
</comment>
<comment type="interaction">
    <interactant intactId="EBI-11750983">
        <id>Q9HC98-4</id>
    </interactant>
    <interactant intactId="EBI-948001">
        <id>Q15323</id>
        <label>KRT31</label>
    </interactant>
    <organismsDiffer>false</organismsDiffer>
    <experiments>3</experiments>
</comment>
<comment type="interaction">
    <interactant intactId="EBI-11750983">
        <id>Q9HC98-4</id>
    </interactant>
    <interactant intactId="EBI-1047093">
        <id>O76011</id>
        <label>KRT34</label>
    </interactant>
    <organismsDiffer>false</organismsDiffer>
    <experiments>3</experiments>
</comment>
<comment type="interaction">
    <interactant intactId="EBI-11750983">
        <id>Q9HC98-4</id>
    </interactant>
    <interactant intactId="EBI-10171697">
        <id>Q6A162</id>
        <label>KRT40</label>
    </interactant>
    <organismsDiffer>false</organismsDiffer>
    <experiments>3</experiments>
</comment>
<comment type="interaction">
    <interactant intactId="EBI-11750983">
        <id>Q9HC98-4</id>
    </interactant>
    <interactant intactId="EBI-2949715">
        <id>O95678</id>
        <label>KRT75</label>
    </interactant>
    <organismsDiffer>false</organismsDiffer>
    <experiments>3</experiments>
</comment>
<comment type="interaction">
    <interactant intactId="EBI-11750983">
        <id>Q9HC98-4</id>
    </interactant>
    <interactant intactId="EBI-297852">
        <id>P05787</id>
        <label>KRT8</label>
    </interactant>
    <organismsDiffer>false</organismsDiffer>
    <experiments>3</experiments>
</comment>
<comment type="interaction">
    <interactant intactId="EBI-11750983">
        <id>Q9HC98-4</id>
    </interactant>
    <interactant intactId="EBI-10171774">
        <id>P60410</id>
        <label>KRTAP10-8</label>
    </interactant>
    <organismsDiffer>false</organismsDiffer>
    <experiments>3</experiments>
</comment>
<comment type="interaction">
    <interactant intactId="EBI-11750983">
        <id>Q9HC98-4</id>
    </interactant>
    <interactant intactId="EBI-10241252">
        <id>Q3SY46</id>
        <label>KRTAP13-3</label>
    </interactant>
    <organismsDiffer>false</organismsDiffer>
    <experiments>3</experiments>
</comment>
<comment type="interaction">
    <interactant intactId="EBI-11750983">
        <id>Q9HC98-4</id>
    </interactant>
    <interactant intactId="EBI-1216080">
        <id>Q9Y250</id>
        <label>LZTS1</label>
    </interactant>
    <organismsDiffer>false</organismsDiffer>
    <experiments>3</experiments>
</comment>
<comment type="interaction">
    <interactant intactId="EBI-11750983">
        <id>Q9HC98-4</id>
    </interactant>
    <interactant intactId="EBI-741037">
        <id>Q9BRK4</id>
        <label>LZTS2</label>
    </interactant>
    <organismsDiffer>false</organismsDiffer>
    <experiments>3</experiments>
</comment>
<comment type="interaction">
    <interactant intactId="EBI-11750983">
        <id>Q9HC98-4</id>
    </interactant>
    <interactant intactId="EBI-12516603">
        <id>Q8WWY6</id>
        <label>MBD3L1</label>
    </interactant>
    <organismsDiffer>false</organismsDiffer>
    <experiments>5</experiments>
</comment>
<comment type="interaction">
    <interactant intactId="EBI-11750983">
        <id>Q9HC98-4</id>
    </interactant>
    <interactant intactId="EBI-16439278">
        <id>Q6FHY5</id>
        <label>MEOX2</label>
    </interactant>
    <organismsDiffer>false</organismsDiffer>
    <experiments>3</experiments>
</comment>
<comment type="interaction">
    <interactant intactId="EBI-11750983">
        <id>Q9HC98-4</id>
    </interactant>
    <interactant intactId="EBI-10174029">
        <id>A6NJ78-4</id>
        <label>METTL15</label>
    </interactant>
    <organismsDiffer>false</organismsDiffer>
    <experiments>3</experiments>
</comment>
<comment type="interaction">
    <interactant intactId="EBI-11750983">
        <id>Q9HC98-4</id>
    </interactant>
    <interactant intactId="EBI-3906629">
        <id>P15173</id>
        <label>MYOG</label>
    </interactant>
    <organismsDiffer>false</organismsDiffer>
    <experiments>3</experiments>
</comment>
<comment type="interaction">
    <interactant intactId="EBI-11750983">
        <id>Q9HC98-4</id>
    </interactant>
    <interactant intactId="EBI-5662487">
        <id>Q8TDC0</id>
        <label>MYOZ3</label>
    </interactant>
    <organismsDiffer>false</organismsDiffer>
    <experiments>3</experiments>
</comment>
<comment type="interaction">
    <interactant intactId="EBI-11750983">
        <id>Q9HC98-4</id>
    </interactant>
    <interactant intactId="EBI-10172876">
        <id>Q7Z6G3-2</id>
        <label>NECAB2</label>
    </interactant>
    <organismsDiffer>false</organismsDiffer>
    <experiments>3</experiments>
</comment>
<comment type="interaction">
    <interactant intactId="EBI-11750983">
        <id>Q9HC98-4</id>
    </interactant>
    <interactant intactId="EBI-475646">
        <id>P07196</id>
        <label>NEFL</label>
    </interactant>
    <organismsDiffer>false</organismsDiffer>
    <experiments>3</experiments>
</comment>
<comment type="interaction">
    <interactant intactId="EBI-11750983">
        <id>Q9HC98-4</id>
    </interactant>
    <interactant intactId="EBI-1055945">
        <id>Q8TDX7</id>
        <label>NEK7</label>
    </interactant>
    <organismsDiffer>false</organismsDiffer>
    <experiments>3</experiments>
</comment>
<comment type="interaction">
    <interactant intactId="EBI-11750983">
        <id>Q9HC98-4</id>
    </interactant>
    <interactant intactId="EBI-740897">
        <id>Q9GZT8</id>
        <label>NIF3L1</label>
    </interactant>
    <organismsDiffer>false</organismsDiffer>
    <experiments>5</experiments>
</comment>
<comment type="interaction">
    <interactant intactId="EBI-11750983">
        <id>Q9HC98-4</id>
    </interactant>
    <interactant intactId="EBI-2949792">
        <id>Q9BRJ7</id>
        <label>NUDT16L1</label>
    </interactant>
    <organismsDiffer>false</organismsDiffer>
    <experiments>3</experiments>
</comment>
<comment type="interaction">
    <interactant intactId="EBI-11750983">
        <id>Q9HC98-4</id>
    </interactant>
    <interactant intactId="EBI-10302990">
        <id>Q9BYU1</id>
        <label>PBX4</label>
    </interactant>
    <organismsDiffer>false</organismsDiffer>
    <experiments>3</experiments>
</comment>
<comment type="interaction">
    <interactant intactId="EBI-11750983">
        <id>Q9HC98-4</id>
    </interactant>
    <interactant intactId="EBI-79165">
        <id>Q9NRD5</id>
        <label>PICK1</label>
    </interactant>
    <organismsDiffer>false</organismsDiffer>
    <experiments>3</experiments>
</comment>
<comment type="interaction">
    <interactant intactId="EBI-11750983">
        <id>Q9HC98-4</id>
    </interactant>
    <interactant intactId="EBI-12069346">
        <id>Q6IQ23-2</id>
        <label>PLEKHA7</label>
    </interactant>
    <organismsDiffer>false</organismsDiffer>
    <experiments>3</experiments>
</comment>
<comment type="interaction">
    <interactant intactId="EBI-11750983">
        <id>Q9HC98-4</id>
    </interactant>
    <interactant intactId="EBI-710402">
        <id>Q96I34</id>
        <label>PPP1R16A</label>
    </interactant>
    <organismsDiffer>false</organismsDiffer>
    <experiments>3</experiments>
</comment>
<comment type="interaction">
    <interactant intactId="EBI-11750983">
        <id>Q9HC98-4</id>
    </interactant>
    <interactant intactId="EBI-11320284">
        <id>Q9NQX0</id>
        <label>PRDM6</label>
    </interactant>
    <organismsDiffer>false</organismsDiffer>
    <experiments>3</experiments>
</comment>
<comment type="interaction">
    <interactant intactId="EBI-11750983">
        <id>Q9HC98-4</id>
    </interactant>
    <interactant intactId="EBI-2860264">
        <id>Q16825</id>
        <label>PTPN21</label>
    </interactant>
    <organismsDiffer>false</organismsDiffer>
    <experiments>3</experiments>
</comment>
<comment type="interaction">
    <interactant intactId="EBI-11750983">
        <id>Q9HC98-4</id>
    </interactant>
    <interactant intactId="EBI-1210429">
        <id>Q9NYW8</id>
        <label>RBAK</label>
    </interactant>
    <organismsDiffer>false</organismsDiffer>
    <experiments>3</experiments>
</comment>
<comment type="interaction">
    <interactant intactId="EBI-11750983">
        <id>Q9HC98-4</id>
    </interactant>
    <interactant intactId="EBI-10182375">
        <id>Q9UFD9</id>
        <label>RIMBP3</label>
    </interactant>
    <organismsDiffer>false</organismsDiffer>
    <experiments>3</experiments>
</comment>
<comment type="interaction">
    <interactant intactId="EBI-11750983">
        <id>Q9HC98-4</id>
    </interactant>
    <interactant intactId="EBI-1046616">
        <id>P51812</id>
        <label>RPS6KA3</label>
    </interactant>
    <organismsDiffer>false</organismsDiffer>
    <experiments>3</experiments>
</comment>
<comment type="interaction">
    <interactant intactId="EBI-11750983">
        <id>Q9HC98-4</id>
    </interactant>
    <interactant intactId="EBI-3957636">
        <id>Q8IYX7</id>
        <label>SAXO1</label>
    </interactant>
    <organismsDiffer>false</organismsDiffer>
    <experiments>3</experiments>
</comment>
<comment type="interaction">
    <interactant intactId="EBI-11750983">
        <id>Q9HC98-4</id>
    </interactant>
    <interactant intactId="EBI-12021638">
        <id>Q8NA69</id>
        <label>SAXO5</label>
    </interactant>
    <organismsDiffer>false</organismsDiffer>
    <experiments>3</experiments>
</comment>
<comment type="interaction">
    <interactant intactId="EBI-11750983">
        <id>Q9HC98-4</id>
    </interactant>
    <interactant intactId="EBI-2130111">
        <id>Q8TEC5</id>
        <label>SH3RF2</label>
    </interactant>
    <organismsDiffer>false</organismsDiffer>
    <experiments>3</experiments>
</comment>
<comment type="interaction">
    <interactant intactId="EBI-11750983">
        <id>Q9HC98-4</id>
    </interactant>
    <interactant intactId="EBI-12275818">
        <id>Q53HV7-2</id>
        <label>SMUG1</label>
    </interactant>
    <organismsDiffer>false</organismsDiffer>
    <experiments>3</experiments>
</comment>
<comment type="interaction">
    <interactant intactId="EBI-11750983">
        <id>Q9HC98-4</id>
    </interactant>
    <interactant intactId="EBI-741237">
        <id>O60504</id>
        <label>SORBS3</label>
    </interactant>
    <organismsDiffer>false</organismsDiffer>
    <experiments>3</experiments>
</comment>
<comment type="interaction">
    <interactant intactId="EBI-11750983">
        <id>Q9HC98-4</id>
    </interactant>
    <interactant intactId="EBI-12290641">
        <id>O43610</id>
        <label>SPRY3</label>
    </interactant>
    <organismsDiffer>false</organismsDiffer>
    <experiments>3</experiments>
</comment>
<comment type="interaction">
    <interactant intactId="EBI-11750983">
        <id>Q9HC98-4</id>
    </interactant>
    <interactant intactId="EBI-745958">
        <id>Q5VWN6</id>
        <label>TASOR2</label>
    </interactant>
    <organismsDiffer>false</organismsDiffer>
    <experiments>3</experiments>
</comment>
<comment type="interaction">
    <interactant intactId="EBI-11750983">
        <id>Q9HC98-4</id>
    </interactant>
    <interactant intactId="EBI-11952764">
        <id>Q99081-3</id>
        <label>TCF12</label>
    </interactant>
    <organismsDiffer>false</organismsDiffer>
    <experiments>3</experiments>
</comment>
<comment type="interaction">
    <interactant intactId="EBI-11750983">
        <id>Q9HC98-4</id>
    </interactant>
    <interactant intactId="EBI-13636688">
        <id>P15884-3</id>
        <label>TCF4</label>
    </interactant>
    <organismsDiffer>false</organismsDiffer>
    <experiments>3</experiments>
</comment>
<comment type="interaction">
    <interactant intactId="EBI-11750983">
        <id>Q9HC98-4</id>
    </interactant>
    <interactant intactId="EBI-11139477">
        <id>Q96N21</id>
        <label>TEPSIN</label>
    </interactant>
    <organismsDiffer>false</organismsDiffer>
    <experiments>3</experiments>
</comment>
<comment type="interaction">
    <interactant intactId="EBI-11750983">
        <id>Q9HC98-4</id>
    </interactant>
    <interactant intactId="EBI-1105213">
        <id>Q9UBB9</id>
        <label>TFIP11</label>
    </interactant>
    <organismsDiffer>false</organismsDiffer>
    <experiments>3</experiments>
</comment>
<comment type="interaction">
    <interactant intactId="EBI-11750983">
        <id>Q9HC98-4</id>
    </interactant>
    <interactant intactId="EBI-11741437">
        <id>Q08117-2</id>
        <label>TLE5</label>
    </interactant>
    <organismsDiffer>false</organismsDiffer>
    <experiments>3</experiments>
</comment>
<comment type="interaction">
    <interactant intactId="EBI-11750983">
        <id>Q9HC98-4</id>
    </interactant>
    <interactant intactId="EBI-355744">
        <id>Q12933</id>
        <label>TRAF2</label>
    </interactant>
    <organismsDiffer>false</organismsDiffer>
    <experiments>3</experiments>
</comment>
<comment type="interaction">
    <interactant intactId="EBI-11750983">
        <id>Q9HC98-4</id>
    </interactant>
    <interactant intactId="EBI-719493">
        <id>P14373</id>
        <label>TRIM27</label>
    </interactant>
    <organismsDiffer>false</organismsDiffer>
    <experiments>3</experiments>
</comment>
<comment type="interaction">
    <interactant intactId="EBI-11750983">
        <id>Q9HC98-4</id>
    </interactant>
    <interactant intactId="EBI-2130429">
        <id>Q9BYV2</id>
        <label>TRIM54</label>
    </interactant>
    <organismsDiffer>false</organismsDiffer>
    <experiments>3</experiments>
</comment>
<comment type="interaction">
    <interactant intactId="EBI-11750983">
        <id>Q9HC98-4</id>
    </interactant>
    <interactant intactId="EBI-11524408">
        <id>Q5T124-6</id>
        <label>UBXN11</label>
    </interactant>
    <organismsDiffer>false</organismsDiffer>
    <experiments>3</experiments>
</comment>
<comment type="interaction">
    <interactant intactId="EBI-11750983">
        <id>Q9HC98-4</id>
    </interactant>
    <interactant intactId="EBI-14104088">
        <id>Q53FD0-2</id>
        <label>ZC2HC1C</label>
    </interactant>
    <organismsDiffer>false</organismsDiffer>
    <experiments>3</experiments>
</comment>
<comment type="interaction">
    <interactant intactId="EBI-11750983">
        <id>Q9HC98-4</id>
    </interactant>
    <interactant intactId="EBI-7265024">
        <id>Q8N3Z6</id>
        <label>ZCCHC7</label>
    </interactant>
    <organismsDiffer>false</organismsDiffer>
    <experiments>3</experiments>
</comment>
<comment type="interaction">
    <interactant intactId="EBI-11750983">
        <id>Q9HC98-4</id>
    </interactant>
    <interactant intactId="EBI-11419867">
        <id>Q8TF47</id>
        <label>ZFP90</label>
    </interactant>
    <organismsDiffer>false</organismsDiffer>
    <experiments>3</experiments>
</comment>
<comment type="interaction">
    <interactant intactId="EBI-11750983">
        <id>Q9HC98-4</id>
    </interactant>
    <interactant intactId="EBI-707773">
        <id>P17028</id>
        <label>ZNF24</label>
    </interactant>
    <organismsDiffer>false</organismsDiffer>
    <experiments>3</experiments>
</comment>
<comment type="interaction">
    <interactant intactId="EBI-11750983">
        <id>Q9HC98-4</id>
    </interactant>
    <interactant intactId="EBI-10252492">
        <id>Q6P1L6</id>
        <label>ZNF343</label>
    </interactant>
    <organismsDiffer>false</organismsDiffer>
    <experiments>3</experiments>
</comment>
<comment type="interaction">
    <interactant intactId="EBI-11750983">
        <id>Q9HC98-4</id>
    </interactant>
    <interactant intactId="EBI-11962468">
        <id>Q7Z4V0</id>
        <label>ZNF438</label>
    </interactant>
    <organismsDiffer>false</organismsDiffer>
    <experiments>3</experiments>
</comment>
<comment type="interaction">
    <interactant intactId="EBI-11750983">
        <id>Q9HC98-4</id>
    </interactant>
    <interactant intactId="EBI-6427977">
        <id>Q96SQ5</id>
        <label>ZNF587</label>
    </interactant>
    <organismsDiffer>false</organismsDiffer>
    <experiments>3</experiments>
</comment>
<comment type="interaction">
    <interactant intactId="EBI-11750983">
        <id>Q9HC98-4</id>
    </interactant>
    <interactant intactId="EBI-4395732">
        <id>P0C7X2</id>
        <label>ZNF688</label>
    </interactant>
    <organismsDiffer>false</organismsDiffer>
    <experiments>3</experiments>
</comment>
<comment type="interaction">
    <interactant intactId="EBI-11750983">
        <id>Q9HC98-4</id>
    </interactant>
    <interactant intactId="EBI-10251462">
        <id>Q6NX45</id>
        <label>ZNF774</label>
    </interactant>
    <organismsDiffer>false</organismsDiffer>
    <experiments>3</experiments>
</comment>
<comment type="interaction">
    <interactant intactId="EBI-11750983">
        <id>Q9HC98-4</id>
    </interactant>
    <interactant intactId="EBI-527853">
        <id>Q9UGI0</id>
        <label>ZRANB1</label>
    </interactant>
    <organismsDiffer>false</organismsDiffer>
    <experiments>3</experiments>
</comment>
<comment type="subcellular location">
    <subcellularLocation>
        <location>Cytoplasm</location>
    </subcellularLocation>
    <subcellularLocation>
        <location>Nucleus</location>
    </subcellularLocation>
    <subcellularLocation>
        <location>Nucleus speckle</location>
    </subcellularLocation>
    <subcellularLocation>
        <location>Cytoplasm</location>
        <location>Cytoskeleton</location>
        <location>Microtubule organizing center</location>
        <location>Centrosome</location>
    </subcellularLocation>
    <subcellularLocation>
        <location>Cytoplasm</location>
        <location>Cytoskeleton</location>
        <location>Spindle pole</location>
    </subcellularLocation>
    <text>Colocalizes with APBB1 at the nuclear speckles. Colocalizes with PIN1 in the nucleus. Colocalizes with ATF4, CIR1, ARHGAP33, ANKRA2, CDC42, NEK9, RAD26L, RBBP6, RPS7, TRIP4, RELB and PHF1 in the centrosome. Localizes to spindle microtubules in metaphase and anaphase and to the midbody during cytokinesis.</text>
</comment>
<comment type="alternative products">
    <event type="alternative splicing"/>
    <isoform>
        <id>Q9HC98-1</id>
        <name>1</name>
        <sequence type="displayed"/>
    </isoform>
    <isoform>
        <id>Q9HC98-2</id>
        <name>2</name>
        <sequence type="described" ref="VSP_041798"/>
    </isoform>
    <isoform>
        <id>Q9HC98-3</id>
        <name>3</name>
        <sequence type="described" ref="VSP_041799"/>
    </isoform>
    <isoform>
        <id>Q9HC98-4</id>
        <name>4</name>
        <sequence type="described" ref="VSP_041800"/>
    </isoform>
</comment>
<comment type="tissue specificity">
    <text evidence="6">Ubiquitous, with highest expression in heart and skeletal muscle.</text>
</comment>
<comment type="induction">
    <text evidence="8 17">Up-regulated during the M phase of cell cycle progression. Down-regulated in both replicative and premature senescence of cancer cells.</text>
</comment>
<comment type="domain">
    <text evidence="14">Displays an autoinhibited conformation: Tyr-108 side chain points into the active site, interacts with the activation loop, and blocks the alphaC helix. The autoinhibitory conformation is released upon binding with NEK9.</text>
</comment>
<comment type="PTM">
    <text evidence="7 8 10 11 16">Autophosphorylated. Phosphorylation at Ser-206 is required for its activation. Phosphorylated upon IR or UV-induced DNA damage. Phosphorylated by CHEK1 and CHEK2. Interaction with APBB1 down-regulates phosphorylation at Thr-210.</text>
</comment>
<comment type="similarity">
    <text evidence="21">Belongs to the protein kinase superfamily. NEK Ser/Thr protein kinase family. NIMA subfamily.</text>
</comment>
<comment type="caution">
    <text evidence="15 24">A paper showing a role in tumorigenesis has been retracted due to panel duplication in several figures.</text>
</comment>
<comment type="sequence caution" evidence="21">
    <conflict type="miscellaneous discrepancy">
        <sequence resource="EMBL-CDS" id="AAG13417"/>
    </conflict>
    <text>Contaminating sequence. Sequence of unknown origin in the N-terminal part.</text>
</comment>
<comment type="sequence caution" evidence="21">
    <conflict type="erroneous initiation">
        <sequence resource="EMBL-CDS" id="AAH00101"/>
    </conflict>
    <text>Truncated N-terminus.</text>
</comment>
<comment type="sequence caution" evidence="21">
    <conflict type="erroneous initiation">
        <sequence resource="EMBL-CDS" id="AAH04174"/>
    </conflict>
    <text>Truncated N-terminus.</text>
</comment>
<comment type="sequence caution" evidence="21">
    <conflict type="erroneous initiation">
        <sequence resource="EMBL-CDS" id="AAH04209"/>
    </conflict>
    <text>Truncated N-terminus.</text>
</comment>
<comment type="sequence caution" evidence="21">
    <conflict type="erroneous initiation">
        <sequence resource="EMBL-CDS" id="BAA85045"/>
    </conflict>
    <text>Truncated N-terminus.</text>
</comment>
<reference key="1">
    <citation type="journal article" date="2002" name="Biochem. Biophys. Res. Commun.">
        <title>Identification and characterization of Nek6 protein kinase, a potential human homolog of NIMA histone H3 kinase.</title>
        <authorList>
            <person name="Hashimoto Y."/>
            <person name="Akita H."/>
            <person name="Hibino M."/>
            <person name="Kohri K."/>
            <person name="Nakanishi M."/>
        </authorList>
    </citation>
    <scope>NUCLEOTIDE SEQUENCE [MRNA] (ISOFORM 1)</scope>
    <scope>FUNCTION</scope>
    <scope>SUBCELLULAR LOCATION</scope>
    <scope>TISSUE SPECIFICITY</scope>
</reference>
<reference key="2">
    <citation type="submission" date="1999-04" db="EMBL/GenBank/DDBJ databases">
        <title>A protein kinase weakly similar to nek1.</title>
        <authorList>
            <person name="Saito T."/>
            <person name="Saito R."/>
            <person name="Saito S."/>
        </authorList>
    </citation>
    <scope>NUCLEOTIDE SEQUENCE [MRNA] (ISOFORM 1)</scope>
    <source>
        <tissue>Placenta</tissue>
    </source>
</reference>
<reference key="3">
    <citation type="journal article" date="2004" name="Nat. Genet.">
        <title>Complete sequencing and characterization of 21,243 full-length human cDNAs.</title>
        <authorList>
            <person name="Ota T."/>
            <person name="Suzuki Y."/>
            <person name="Nishikawa T."/>
            <person name="Otsuki T."/>
            <person name="Sugiyama T."/>
            <person name="Irie R."/>
            <person name="Wakamatsu A."/>
            <person name="Hayashi K."/>
            <person name="Sato H."/>
            <person name="Nagai K."/>
            <person name="Kimura K."/>
            <person name="Makita H."/>
            <person name="Sekine M."/>
            <person name="Obayashi M."/>
            <person name="Nishi T."/>
            <person name="Shibahara T."/>
            <person name="Tanaka T."/>
            <person name="Ishii S."/>
            <person name="Yamamoto J."/>
            <person name="Saito K."/>
            <person name="Kawai Y."/>
            <person name="Isono Y."/>
            <person name="Nakamura Y."/>
            <person name="Nagahari K."/>
            <person name="Murakami K."/>
            <person name="Yasuda T."/>
            <person name="Iwayanagi T."/>
            <person name="Wagatsuma M."/>
            <person name="Shiratori A."/>
            <person name="Sudo H."/>
            <person name="Hosoiri T."/>
            <person name="Kaku Y."/>
            <person name="Kodaira H."/>
            <person name="Kondo H."/>
            <person name="Sugawara M."/>
            <person name="Takahashi M."/>
            <person name="Kanda K."/>
            <person name="Yokoi T."/>
            <person name="Furuya T."/>
            <person name="Kikkawa E."/>
            <person name="Omura Y."/>
            <person name="Abe K."/>
            <person name="Kamihara K."/>
            <person name="Katsuta N."/>
            <person name="Sato K."/>
            <person name="Tanikawa M."/>
            <person name="Yamazaki M."/>
            <person name="Ninomiya K."/>
            <person name="Ishibashi T."/>
            <person name="Yamashita H."/>
            <person name="Murakawa K."/>
            <person name="Fujimori K."/>
            <person name="Tanai H."/>
            <person name="Kimata M."/>
            <person name="Watanabe M."/>
            <person name="Hiraoka S."/>
            <person name="Chiba Y."/>
            <person name="Ishida S."/>
            <person name="Ono Y."/>
            <person name="Takiguchi S."/>
            <person name="Watanabe S."/>
            <person name="Yosida M."/>
            <person name="Hotuta T."/>
            <person name="Kusano J."/>
            <person name="Kanehori K."/>
            <person name="Takahashi-Fujii A."/>
            <person name="Hara H."/>
            <person name="Tanase T.-O."/>
            <person name="Nomura Y."/>
            <person name="Togiya S."/>
            <person name="Komai F."/>
            <person name="Hara R."/>
            <person name="Takeuchi K."/>
            <person name="Arita M."/>
            <person name="Imose N."/>
            <person name="Musashino K."/>
            <person name="Yuuki H."/>
            <person name="Oshima A."/>
            <person name="Sasaki N."/>
            <person name="Aotsuka S."/>
            <person name="Yoshikawa Y."/>
            <person name="Matsunawa H."/>
            <person name="Ichihara T."/>
            <person name="Shiohata N."/>
            <person name="Sano S."/>
            <person name="Moriya S."/>
            <person name="Momiyama H."/>
            <person name="Satoh N."/>
            <person name="Takami S."/>
            <person name="Terashima Y."/>
            <person name="Suzuki O."/>
            <person name="Nakagawa S."/>
            <person name="Senoh A."/>
            <person name="Mizoguchi H."/>
            <person name="Goto Y."/>
            <person name="Shimizu F."/>
            <person name="Wakebe H."/>
            <person name="Hishigaki H."/>
            <person name="Watanabe T."/>
            <person name="Sugiyama A."/>
            <person name="Takemoto M."/>
            <person name="Kawakami B."/>
            <person name="Yamazaki M."/>
            <person name="Watanabe K."/>
            <person name="Kumagai A."/>
            <person name="Itakura S."/>
            <person name="Fukuzumi Y."/>
            <person name="Fujimori Y."/>
            <person name="Komiyama M."/>
            <person name="Tashiro H."/>
            <person name="Tanigami A."/>
            <person name="Fujiwara T."/>
            <person name="Ono T."/>
            <person name="Yamada K."/>
            <person name="Fujii Y."/>
            <person name="Ozaki K."/>
            <person name="Hirao M."/>
            <person name="Ohmori Y."/>
            <person name="Kawabata A."/>
            <person name="Hikiji T."/>
            <person name="Kobatake N."/>
            <person name="Inagaki H."/>
            <person name="Ikema Y."/>
            <person name="Okamoto S."/>
            <person name="Okitani R."/>
            <person name="Kawakami T."/>
            <person name="Noguchi S."/>
            <person name="Itoh T."/>
            <person name="Shigeta K."/>
            <person name="Senba T."/>
            <person name="Matsumura K."/>
            <person name="Nakajima Y."/>
            <person name="Mizuno T."/>
            <person name="Morinaga M."/>
            <person name="Sasaki M."/>
            <person name="Togashi T."/>
            <person name="Oyama M."/>
            <person name="Hata H."/>
            <person name="Watanabe M."/>
            <person name="Komatsu T."/>
            <person name="Mizushima-Sugano J."/>
            <person name="Satoh T."/>
            <person name="Shirai Y."/>
            <person name="Takahashi Y."/>
            <person name="Nakagawa K."/>
            <person name="Okumura K."/>
            <person name="Nagase T."/>
            <person name="Nomura N."/>
            <person name="Kikuchi H."/>
            <person name="Masuho Y."/>
            <person name="Yamashita R."/>
            <person name="Nakai K."/>
            <person name="Yada T."/>
            <person name="Nakamura Y."/>
            <person name="Ohara O."/>
            <person name="Isogai T."/>
            <person name="Sugano S."/>
        </authorList>
    </citation>
    <scope>NUCLEOTIDE SEQUENCE [LARGE SCALE MRNA] (ISOFORMS 1 AND 4)</scope>
    <source>
        <tissue>Brain</tissue>
        <tissue>Hippocampus</tissue>
    </source>
</reference>
<reference key="4">
    <citation type="journal article" date="2004" name="Nature">
        <title>DNA sequence and analysis of human chromosome 9.</title>
        <authorList>
            <person name="Humphray S.J."/>
            <person name="Oliver K."/>
            <person name="Hunt A.R."/>
            <person name="Plumb R.W."/>
            <person name="Loveland J.E."/>
            <person name="Howe K.L."/>
            <person name="Andrews T.D."/>
            <person name="Searle S."/>
            <person name="Hunt S.E."/>
            <person name="Scott C.E."/>
            <person name="Jones M.C."/>
            <person name="Ainscough R."/>
            <person name="Almeida J.P."/>
            <person name="Ambrose K.D."/>
            <person name="Ashwell R.I.S."/>
            <person name="Babbage A.K."/>
            <person name="Babbage S."/>
            <person name="Bagguley C.L."/>
            <person name="Bailey J."/>
            <person name="Banerjee R."/>
            <person name="Barker D.J."/>
            <person name="Barlow K.F."/>
            <person name="Bates K."/>
            <person name="Beasley H."/>
            <person name="Beasley O."/>
            <person name="Bird C.P."/>
            <person name="Bray-Allen S."/>
            <person name="Brown A.J."/>
            <person name="Brown J.Y."/>
            <person name="Burford D."/>
            <person name="Burrill W."/>
            <person name="Burton J."/>
            <person name="Carder C."/>
            <person name="Carter N.P."/>
            <person name="Chapman J.C."/>
            <person name="Chen Y."/>
            <person name="Clarke G."/>
            <person name="Clark S.Y."/>
            <person name="Clee C.M."/>
            <person name="Clegg S."/>
            <person name="Collier R.E."/>
            <person name="Corby N."/>
            <person name="Crosier M."/>
            <person name="Cummings A.T."/>
            <person name="Davies J."/>
            <person name="Dhami P."/>
            <person name="Dunn M."/>
            <person name="Dutta I."/>
            <person name="Dyer L.W."/>
            <person name="Earthrowl M.E."/>
            <person name="Faulkner L."/>
            <person name="Fleming C.J."/>
            <person name="Frankish A."/>
            <person name="Frankland J.A."/>
            <person name="French L."/>
            <person name="Fricker D.G."/>
            <person name="Garner P."/>
            <person name="Garnett J."/>
            <person name="Ghori J."/>
            <person name="Gilbert J.G.R."/>
            <person name="Glison C."/>
            <person name="Grafham D.V."/>
            <person name="Gribble S."/>
            <person name="Griffiths C."/>
            <person name="Griffiths-Jones S."/>
            <person name="Grocock R."/>
            <person name="Guy J."/>
            <person name="Hall R.E."/>
            <person name="Hammond S."/>
            <person name="Harley J.L."/>
            <person name="Harrison E.S.I."/>
            <person name="Hart E.A."/>
            <person name="Heath P.D."/>
            <person name="Henderson C.D."/>
            <person name="Hopkins B.L."/>
            <person name="Howard P.J."/>
            <person name="Howden P.J."/>
            <person name="Huckle E."/>
            <person name="Johnson C."/>
            <person name="Johnson D."/>
            <person name="Joy A.A."/>
            <person name="Kay M."/>
            <person name="Keenan S."/>
            <person name="Kershaw J.K."/>
            <person name="Kimberley A.M."/>
            <person name="King A."/>
            <person name="Knights A."/>
            <person name="Laird G.K."/>
            <person name="Langford C."/>
            <person name="Lawlor S."/>
            <person name="Leongamornlert D.A."/>
            <person name="Leversha M."/>
            <person name="Lloyd C."/>
            <person name="Lloyd D.M."/>
            <person name="Lovell J."/>
            <person name="Martin S."/>
            <person name="Mashreghi-Mohammadi M."/>
            <person name="Matthews L."/>
            <person name="McLaren S."/>
            <person name="McLay K.E."/>
            <person name="McMurray A."/>
            <person name="Milne S."/>
            <person name="Nickerson T."/>
            <person name="Nisbett J."/>
            <person name="Nordsiek G."/>
            <person name="Pearce A.V."/>
            <person name="Peck A.I."/>
            <person name="Porter K.M."/>
            <person name="Pandian R."/>
            <person name="Pelan S."/>
            <person name="Phillimore B."/>
            <person name="Povey S."/>
            <person name="Ramsey Y."/>
            <person name="Rand V."/>
            <person name="Scharfe M."/>
            <person name="Sehra H.K."/>
            <person name="Shownkeen R."/>
            <person name="Sims S.K."/>
            <person name="Skuce C.D."/>
            <person name="Smith M."/>
            <person name="Steward C.A."/>
            <person name="Swarbreck D."/>
            <person name="Sycamore N."/>
            <person name="Tester J."/>
            <person name="Thorpe A."/>
            <person name="Tracey A."/>
            <person name="Tromans A."/>
            <person name="Thomas D.W."/>
            <person name="Wall M."/>
            <person name="Wallis J.M."/>
            <person name="West A.P."/>
            <person name="Whitehead S.L."/>
            <person name="Willey D.L."/>
            <person name="Williams S.A."/>
            <person name="Wilming L."/>
            <person name="Wray P.W."/>
            <person name="Young L."/>
            <person name="Ashurst J.L."/>
            <person name="Coulson A."/>
            <person name="Blocker H."/>
            <person name="Durbin R.M."/>
            <person name="Sulston J.E."/>
            <person name="Hubbard T."/>
            <person name="Jackson M.J."/>
            <person name="Bentley D.R."/>
            <person name="Beck S."/>
            <person name="Rogers J."/>
            <person name="Dunham I."/>
        </authorList>
    </citation>
    <scope>NUCLEOTIDE SEQUENCE [LARGE SCALE GENOMIC DNA]</scope>
</reference>
<reference key="5">
    <citation type="submission" date="2005-07" db="EMBL/GenBank/DDBJ databases">
        <authorList>
            <person name="Mural R.J."/>
            <person name="Istrail S."/>
            <person name="Sutton G.G."/>
            <person name="Florea L."/>
            <person name="Halpern A.L."/>
            <person name="Mobarry C.M."/>
            <person name="Lippert R."/>
            <person name="Walenz B."/>
            <person name="Shatkay H."/>
            <person name="Dew I."/>
            <person name="Miller J.R."/>
            <person name="Flanigan M.J."/>
            <person name="Edwards N.J."/>
            <person name="Bolanos R."/>
            <person name="Fasulo D."/>
            <person name="Halldorsson B.V."/>
            <person name="Hannenhalli S."/>
            <person name="Turner R."/>
            <person name="Yooseph S."/>
            <person name="Lu F."/>
            <person name="Nusskern D.R."/>
            <person name="Shue B.C."/>
            <person name="Zheng X.H."/>
            <person name="Zhong F."/>
            <person name="Delcher A.L."/>
            <person name="Huson D.H."/>
            <person name="Kravitz S.A."/>
            <person name="Mouchard L."/>
            <person name="Reinert K."/>
            <person name="Remington K.A."/>
            <person name="Clark A.G."/>
            <person name="Waterman M.S."/>
            <person name="Eichler E.E."/>
            <person name="Adams M.D."/>
            <person name="Hunkapiller M.W."/>
            <person name="Myers E.W."/>
            <person name="Venter J.C."/>
        </authorList>
    </citation>
    <scope>NUCLEOTIDE SEQUENCE [LARGE SCALE GENOMIC DNA]</scope>
</reference>
<reference key="6">
    <citation type="journal article" date="2004" name="Genome Res.">
        <title>The status, quality, and expansion of the NIH full-length cDNA project: the Mammalian Gene Collection (MGC).</title>
        <authorList>
            <consortium name="The MGC Project Team"/>
        </authorList>
    </citation>
    <scope>NUCLEOTIDE SEQUENCE [LARGE SCALE MRNA] (ISOFORMS 1; 2 AND 3)</scope>
    <source>
        <tissue>Kidney</tissue>
        <tissue>Pancreas</tissue>
    </source>
</reference>
<reference key="7">
    <citation type="submission" date="2004-06" db="EMBL/GenBank/DDBJ databases">
        <title>Cloning of human full open reading frames in Gateway(TM) system entry vector (pDONR201).</title>
        <authorList>
            <person name="Ebert L."/>
            <person name="Schick M."/>
            <person name="Neubert P."/>
            <person name="Schatten R."/>
            <person name="Henze S."/>
            <person name="Korn B."/>
        </authorList>
    </citation>
    <scope>NUCLEOTIDE SEQUENCE [LARGE SCALE MRNA] OF 8-313 (ISOFORMS 1/2/3/4)</scope>
</reference>
<reference key="8">
    <citation type="journal article" date="2001" name="Curr. Biol.">
        <title>Identification of the NIMA family kinases NEK6/7 as regulators of the p70 ribosomal S6 kinase.</title>
        <authorList>
            <person name="Belham C."/>
            <person name="Comb M.J."/>
            <person name="Avruch J."/>
        </authorList>
    </citation>
    <scope>FUNCTION</scope>
    <scope>CATALYTIC ACTIVITY</scope>
</reference>
<reference key="9">
    <citation type="journal article" date="2003" name="J. Biol. Chem.">
        <title>A mitotic cascade of NIMA family kinases. Nercc1/Nek9 activates the Nek6 and Nek7 kinases.</title>
        <authorList>
            <person name="Belham C."/>
            <person name="Roig J."/>
            <person name="Caldwell J.A."/>
            <person name="Aoyama Y."/>
            <person name="Kemp B.E."/>
            <person name="Comb M."/>
            <person name="Avruch J."/>
        </authorList>
    </citation>
    <scope>PHOSPHORYLATION AT SER-37; THR-202 AND SER-206</scope>
</reference>
<reference key="10">
    <citation type="journal article" date="2003" name="J. Biol. Chem.">
        <title>The serine/threonine kinase Nek6 is required for cell cycle progression through mitosis.</title>
        <authorList>
            <person name="Yin M.J."/>
            <person name="Shao L."/>
            <person name="Voehringer D."/>
            <person name="Smeal T."/>
            <person name="Jallal B."/>
        </authorList>
    </citation>
    <scope>FUNCTION</scope>
    <scope>CATALYTIC ACTIVITY</scope>
    <scope>COFACTOR</scope>
    <scope>AUTOPHOSPHORYLATION</scope>
    <scope>MUTAGENESIS OF LYS-74 AND LYS-75</scope>
    <scope>INDUCTION</scope>
</reference>
<reference key="11">
    <citation type="journal article" date="2006" name="Biochem. Biophys. Res. Commun.">
        <title>Interaction of Pin1 with Nek6 and characterization of their expression correlation in Chinese hepatocellular carcinoma patients.</title>
        <authorList>
            <person name="Chen J."/>
            <person name="Li L."/>
            <person name="Zhang Y."/>
            <person name="Yang H."/>
            <person name="Wei Y."/>
            <person name="Zhang L."/>
            <person name="Liu X."/>
            <person name="Yu L."/>
        </authorList>
    </citation>
    <scope>SUBCELLULAR LOCATION</scope>
    <scope>INTERACTION WITH PIN1</scope>
</reference>
<reference key="12">
    <citation type="journal article" date="2007" name="Biochem. Biophys. Res. Commun.">
        <title>Human NIMA-related kinase 6 is one of the Fe65 WW domain binding proteins.</title>
        <authorList>
            <person name="Lee E.J."/>
            <person name="Hyun S.H."/>
            <person name="Chun J."/>
            <person name="Kang S.S."/>
        </authorList>
    </citation>
    <scope>SUBCELLULAR LOCATION</scope>
    <scope>INTERACTION WITH APBB1</scope>
    <scope>PHOSPHORYLATION AT THR-210</scope>
</reference>
<reference key="13">
    <citation type="journal article" date="2008" name="Cell Cycle">
        <title>Nek6 is involved in G2/M phase cell cycle arrest through DNA damage-induced phosphorylation.</title>
        <authorList>
            <person name="Lee M.Y."/>
            <person name="Kim H.J."/>
            <person name="Kim M.A."/>
            <person name="Jee H.J."/>
            <person name="Kim A.J."/>
            <person name="Bae Y.S."/>
            <person name="Park J.I."/>
            <person name="Chung J.H."/>
            <person name="Yun J."/>
        </authorList>
    </citation>
    <scope>FUNCTION</scope>
    <scope>PHOSPHORYLATION</scope>
</reference>
<reference key="14">
    <citation type="journal article" date="2008" name="J. Cell Sci.">
        <title>The NIMA-family kinase Nek6 phosphorylates the kinesin Eg5 at a novel site necessary for mitotic spindle formation.</title>
        <authorList>
            <person name="Rapley J."/>
            <person name="Nicolas M."/>
            <person name="Groen A."/>
            <person name="Regue L."/>
            <person name="Bertran M.T."/>
            <person name="Caelles C."/>
            <person name="Avruch J."/>
            <person name="Roig J."/>
        </authorList>
    </citation>
    <scope>FUNCTION</scope>
    <scope>CATALYTIC ACTIVITY</scope>
    <scope>INTERACTION WITH KIF11 AND NEK9</scope>
    <scope>MUTAGENESIS OF LYS-74 AND LYS-75</scope>
</reference>
<reference key="15">
    <citation type="journal article" date="2009" name="Mol. Cell">
        <title>An autoinhibitory tyrosine motif in the cell-cycle-regulated Nek7 kinase is released through binding of Nek9.</title>
        <authorList>
            <person name="Richards M.W."/>
            <person name="O'Regan L."/>
            <person name="Mas-Droux C."/>
            <person name="Blot J.M."/>
            <person name="Cheung J."/>
            <person name="Hoelder S."/>
            <person name="Fry A.M."/>
            <person name="Bayliss R."/>
        </authorList>
    </citation>
    <scope>DOMAIN</scope>
    <scope>ACTIVITY REGULATION</scope>
    <scope>MUTAGENESIS OF TYR-108</scope>
</reference>
<reference key="16">
    <citation type="journal article" date="2009" name="Mol. Cell. Biol.">
        <title>The Nek6 and Nek7 protein kinases are required for robust mitotic spindle formation and cytokinesis.</title>
        <authorList>
            <person name="O'Regan L."/>
            <person name="Fry A.M."/>
        </authorList>
    </citation>
    <scope>FUNCTION</scope>
    <scope>SUBCELLULAR LOCATION</scope>
    <scope>INTERACTION WITH NEK9</scope>
</reference>
<reference key="17">
    <citation type="journal article" date="2009" name="Mol. Cell. Proteomics">
        <title>Large-scale proteomics analysis of the human kinome.</title>
        <authorList>
            <person name="Oppermann F.S."/>
            <person name="Gnad F."/>
            <person name="Olsen J.V."/>
            <person name="Hornberger R."/>
            <person name="Greff Z."/>
            <person name="Keri G."/>
            <person name="Mann M."/>
            <person name="Daub H."/>
        </authorList>
    </citation>
    <scope>PHOSPHORYLATION [LARGE SCALE ANALYSIS] AT SER-206</scope>
    <scope>IDENTIFICATION BY MASS SPECTROMETRY [LARGE SCALE ANALYSIS]</scope>
</reference>
<reference key="18">
    <citation type="journal article" date="2010" name="Cell Cycle">
        <title>Nek6 overexpression antagonizes p53-induced senescence in human cancer cells.</title>
        <authorList>
            <person name="Jee H.J."/>
            <person name="Kim A.J."/>
            <person name="Song N."/>
            <person name="Kim H.J."/>
            <person name="Kim M."/>
            <person name="Koh H."/>
            <person name="Yun J."/>
        </authorList>
    </citation>
    <scope>FUNCTION</scope>
    <scope>INDUCTION</scope>
</reference>
<reference key="19">
    <citation type="journal article" date="2010" name="J. Proteome Res.">
        <title>Characterization of hNek6 interactome reveals an important role for its short N-terminal domain and colocalization with proteins at the centrosome.</title>
        <authorList>
            <person name="Vaz Meirelles G."/>
            <person name="Ferreira Lanza D.C."/>
            <person name="da Silva J.C."/>
            <person name="Santana Bernachi J."/>
            <person name="Paes Leme A.F."/>
            <person name="Kobarg J."/>
        </authorList>
    </citation>
    <scope>FUNCTION</scope>
    <scope>INTERACTION WITH ANKRA2; ATF4; ARHGAP33; CDC42; CIR1; NEK9; PRAM1; PTN; PRDX3; RAD26L; RBBP6; RPS7 AND TRIP4</scope>
    <scope>PHOSPHORYLATION AT SER-206</scope>
    <scope>AUTOPHOSPHORYLATION</scope>
</reference>
<reference key="20">
    <citation type="journal article" date="2010" name="Mol. Cancer Res.">
        <title>Nek6 mediates human cancer cell transformation and is a potential cancer therapeutic target.</title>
        <authorList>
            <person name="Nassirpour R."/>
            <person name="Shao L."/>
            <person name="Flanagan P."/>
            <person name="Abrams T."/>
            <person name="Jallal B."/>
            <person name="Smeal T."/>
            <person name="Yin M.J."/>
        </authorList>
    </citation>
    <scope>RETRACTED PAPER</scope>
</reference>
<reference key="21">
    <citation type="journal article" date="2017" name="Mol. Cancer Res.">
        <title>Retraction: Nek6 Mediates Human Cancer Cell Transformation and Is a Potential Cancer Therapeutic Target.</title>
        <authorList>
            <person name="Nassirpour R."/>
            <person name="Shao L."/>
            <person name="Flanagan P."/>
            <person name="Abrams T."/>
            <person name="Jallal B."/>
            <person name="Smeal T."/>
            <person name="Yin M.J."/>
        </authorList>
    </citation>
    <scope>RETRACTION NOTICE OF PUBMED:20407017</scope>
</reference>
<reference key="22">
    <citation type="journal article" date="2005" name="J. Cell Sci.">
        <title>Caught Nek-ing: cilia and centrioles.</title>
        <authorList>
            <person name="Quarmby L.M."/>
            <person name="Mahjoub M.R."/>
        </authorList>
    </citation>
    <scope>REVIEW</scope>
</reference>
<reference key="23">
    <citation type="journal article" date="2011" name="Cell Cycle">
        <title>A role for Nek6 kinase activity in preventing senescence?</title>
        <authorList>
            <person name="Fry A.M."/>
        </authorList>
    </citation>
    <scope>REVIEW</scope>
</reference>
<reference key="24">
    <citation type="journal article" date="2013" name="J. Proteome Res.">
        <title>Toward a comprehensive characterization of a human cancer cell phosphoproteome.</title>
        <authorList>
            <person name="Zhou H."/>
            <person name="Di Palma S."/>
            <person name="Preisinger C."/>
            <person name="Peng M."/>
            <person name="Polat A.N."/>
            <person name="Heck A.J."/>
            <person name="Mohammed S."/>
        </authorList>
    </citation>
    <scope>PHOSPHORYLATION [LARGE SCALE ANALYSIS] AT SER-206</scope>
    <scope>IDENTIFICATION BY MASS SPECTROMETRY [LARGE SCALE ANALYSIS]</scope>
    <source>
        <tissue>Erythroleukemia</tissue>
    </source>
</reference>
<reference key="25">
    <citation type="journal article" date="2019" name="Sci. Signal.">
        <title>Mitotic phosphorylation by NEK6 and NEK7 reduces the microtubule affinity of EML4 to promote chromosome congression.</title>
        <authorList>
            <person name="Adib R."/>
            <person name="Montgomery J.M."/>
            <person name="Atherton J."/>
            <person name="O'Regan L."/>
            <person name="Richards M.W."/>
            <person name="Straatman K.R."/>
            <person name="Roth D."/>
            <person name="Straube A."/>
            <person name="Bayliss R."/>
            <person name="Moores C.A."/>
            <person name="Fry A.M."/>
        </authorList>
    </citation>
    <scope>FUNCTION</scope>
</reference>
<proteinExistence type="evidence at protein level"/>